<dbReference type="EC" id="3.5.1.122" evidence="2"/>
<dbReference type="EMBL" id="AK001066">
    <property type="protein sequence ID" value="BAA91488.1"/>
    <property type="molecule type" value="mRNA"/>
</dbReference>
<dbReference type="EMBL" id="AK293492">
    <property type="protein sequence ID" value="BAG56979.1"/>
    <property type="molecule type" value="mRNA"/>
</dbReference>
<dbReference type="EMBL" id="AC021305">
    <property type="status" value="NOT_ANNOTATED_CDS"/>
    <property type="molecule type" value="Genomic_DNA"/>
</dbReference>
<dbReference type="EMBL" id="CH471060">
    <property type="protein sequence ID" value="EAW92038.1"/>
    <property type="molecule type" value="Genomic_DNA"/>
</dbReference>
<dbReference type="EMBL" id="BC008781">
    <property type="protein sequence ID" value="AAH08781.1"/>
    <property type="molecule type" value="mRNA"/>
</dbReference>
<dbReference type="CCDS" id="CCDS6344.1">
    <molecule id="Q96HA8-1"/>
</dbReference>
<dbReference type="CCDS" id="CCDS64965.1">
    <molecule id="Q96HA8-2"/>
</dbReference>
<dbReference type="RefSeq" id="NP_001269953.1">
    <molecule id="Q96HA8-2"/>
    <property type="nucleotide sequence ID" value="NM_001283024.1"/>
</dbReference>
<dbReference type="RefSeq" id="NP_060494.1">
    <molecule id="Q96HA8-1"/>
    <property type="nucleotide sequence ID" value="NM_018024.3"/>
</dbReference>
<dbReference type="PDB" id="3C9Q">
    <property type="method" value="X-ray"/>
    <property type="resolution" value="1.50 A"/>
    <property type="chains" value="A=2-205"/>
</dbReference>
<dbReference type="PDB" id="4W79">
    <property type="method" value="X-ray"/>
    <property type="resolution" value="1.50 A"/>
    <property type="chains" value="A=2-202"/>
</dbReference>
<dbReference type="PDB" id="6KGJ">
    <property type="method" value="X-ray"/>
    <property type="resolution" value="1.80 A"/>
    <property type="chains" value="A/B=2-202"/>
</dbReference>
<dbReference type="PDB" id="8JJF">
    <property type="method" value="X-ray"/>
    <property type="resolution" value="1.51 A"/>
    <property type="chains" value="A=1-202"/>
</dbReference>
<dbReference type="PDB" id="8JJG">
    <property type="method" value="X-ray"/>
    <property type="resolution" value="1.45 A"/>
    <property type="chains" value="B=1-202"/>
</dbReference>
<dbReference type="PDB" id="8JJH">
    <property type="method" value="X-ray"/>
    <property type="resolution" value="1.61 A"/>
    <property type="chains" value="B=1-202"/>
</dbReference>
<dbReference type="PDB" id="8JJI">
    <property type="method" value="X-ray"/>
    <property type="resolution" value="2.21 A"/>
    <property type="chains" value="A/B=1-202"/>
</dbReference>
<dbReference type="PDB" id="8JJU">
    <property type="method" value="X-ray"/>
    <property type="resolution" value="1.46 A"/>
    <property type="chains" value="A/B=1-202"/>
</dbReference>
<dbReference type="PDB" id="8JJW">
    <property type="method" value="X-ray"/>
    <property type="resolution" value="1.40 A"/>
    <property type="chains" value="A/B=1-202"/>
</dbReference>
<dbReference type="PDB" id="8JJX">
    <property type="method" value="X-ray"/>
    <property type="resolution" value="1.70 A"/>
    <property type="chains" value="B=1-202"/>
</dbReference>
<dbReference type="PDB" id="8JJY">
    <property type="method" value="X-ray"/>
    <property type="resolution" value="1.69 A"/>
    <property type="chains" value="A/B=1-202"/>
</dbReference>
<dbReference type="PDB" id="8JJZ">
    <property type="method" value="X-ray"/>
    <property type="resolution" value="2.03 A"/>
    <property type="chains" value="A=1-202"/>
</dbReference>
<dbReference type="PDB" id="8JK0">
    <property type="method" value="X-ray"/>
    <property type="resolution" value="1.45 A"/>
    <property type="chains" value="A=1-202"/>
</dbReference>
<dbReference type="PDB" id="8JK1">
    <property type="method" value="X-ray"/>
    <property type="resolution" value="2.07 A"/>
    <property type="chains" value="A/B=1-202"/>
</dbReference>
<dbReference type="PDB" id="8JK2">
    <property type="method" value="X-ray"/>
    <property type="resolution" value="1.74 A"/>
    <property type="chains" value="A/B=1-202"/>
</dbReference>
<dbReference type="PDBsum" id="3C9Q"/>
<dbReference type="PDBsum" id="4W79"/>
<dbReference type="PDBsum" id="6KGJ"/>
<dbReference type="PDBsum" id="8JJF"/>
<dbReference type="PDBsum" id="8JJG"/>
<dbReference type="PDBsum" id="8JJH"/>
<dbReference type="PDBsum" id="8JJI"/>
<dbReference type="PDBsum" id="8JJU"/>
<dbReference type="PDBsum" id="8JJW"/>
<dbReference type="PDBsum" id="8JJX"/>
<dbReference type="PDBsum" id="8JJY"/>
<dbReference type="PDBsum" id="8JJZ"/>
<dbReference type="PDBsum" id="8JK0"/>
<dbReference type="PDBsum" id="8JK1"/>
<dbReference type="PDBsum" id="8JK2"/>
<dbReference type="SMR" id="Q96HA8"/>
<dbReference type="BioGRID" id="120405">
    <property type="interactions" value="434"/>
</dbReference>
<dbReference type="FunCoup" id="Q96HA8">
    <property type="interactions" value="2905"/>
</dbReference>
<dbReference type="IntAct" id="Q96HA8">
    <property type="interactions" value="426"/>
</dbReference>
<dbReference type="MINT" id="Q96HA8"/>
<dbReference type="STRING" id="9606.ENSP00000287387"/>
<dbReference type="MoonDB" id="Q96HA8">
    <property type="type" value="Predicted"/>
</dbReference>
<dbReference type="GlyGen" id="Q96HA8">
    <property type="glycosylation" value="1 site, 1 O-linked glycan (1 site)"/>
</dbReference>
<dbReference type="iPTMnet" id="Q96HA8"/>
<dbReference type="PhosphoSitePlus" id="Q96HA8"/>
<dbReference type="BioMuta" id="WDYHV1"/>
<dbReference type="DMDM" id="152112225"/>
<dbReference type="jPOST" id="Q96HA8"/>
<dbReference type="MassIVE" id="Q96HA8"/>
<dbReference type="PaxDb" id="9606-ENSP00000287387"/>
<dbReference type="PeptideAtlas" id="Q96HA8"/>
<dbReference type="ProteomicsDB" id="3924"/>
<dbReference type="ProteomicsDB" id="76725">
    <molecule id="Q96HA8-1"/>
</dbReference>
<dbReference type="Pumba" id="Q96HA8"/>
<dbReference type="Antibodypedia" id="13855">
    <property type="antibodies" value="63 antibodies from 17 providers"/>
</dbReference>
<dbReference type="DNASU" id="55093"/>
<dbReference type="Ensembl" id="ENST00000287387.7">
    <molecule id="Q96HA8-1"/>
    <property type="protein sequence ID" value="ENSP00000287387.2"/>
    <property type="gene ID" value="ENSG00000156795.8"/>
</dbReference>
<dbReference type="Ensembl" id="ENST00000523984.5">
    <molecule id="Q96HA8-2"/>
    <property type="protein sequence ID" value="ENSP00000430427.1"/>
    <property type="gene ID" value="ENSG00000156795.8"/>
</dbReference>
<dbReference type="Ensembl" id="ENST00000524254.5">
    <molecule id="Q96HA8-2"/>
    <property type="protein sequence ID" value="ENSP00000497832.1"/>
    <property type="gene ID" value="ENSG00000156795.8"/>
</dbReference>
<dbReference type="GeneID" id="55093"/>
<dbReference type="KEGG" id="hsa:55093"/>
<dbReference type="MANE-Select" id="ENST00000287387.7">
    <property type="protein sequence ID" value="ENSP00000287387.2"/>
    <property type="RefSeq nucleotide sequence ID" value="NM_018024.3"/>
    <property type="RefSeq protein sequence ID" value="NP_060494.1"/>
</dbReference>
<dbReference type="UCSC" id="uc003yqn.3">
    <molecule id="Q96HA8-1"/>
    <property type="organism name" value="human"/>
</dbReference>
<dbReference type="AGR" id="HGNC:25490"/>
<dbReference type="CTD" id="55093"/>
<dbReference type="DisGeNET" id="55093"/>
<dbReference type="GeneCards" id="NTAQ1"/>
<dbReference type="HGNC" id="HGNC:25490">
    <property type="gene designation" value="NTAQ1"/>
</dbReference>
<dbReference type="HPA" id="ENSG00000156795">
    <property type="expression patterns" value="Low tissue specificity"/>
</dbReference>
<dbReference type="MIM" id="620846">
    <property type="type" value="gene"/>
</dbReference>
<dbReference type="neXtProt" id="NX_Q96HA8"/>
<dbReference type="OpenTargets" id="ENSG00000156795"/>
<dbReference type="VEuPathDB" id="HostDB:ENSG00000156795"/>
<dbReference type="eggNOG" id="KOG3261">
    <property type="taxonomic scope" value="Eukaryota"/>
</dbReference>
<dbReference type="GeneTree" id="ENSGT00390000014398"/>
<dbReference type="HOGENOM" id="CLU_091083_1_0_1"/>
<dbReference type="InParanoid" id="Q96HA8"/>
<dbReference type="OMA" id="GWGTVYS"/>
<dbReference type="OrthoDB" id="191192at2759"/>
<dbReference type="PAN-GO" id="Q96HA8">
    <property type="GO annotations" value="4 GO annotations based on evolutionary models"/>
</dbReference>
<dbReference type="PhylomeDB" id="Q96HA8"/>
<dbReference type="TreeFam" id="TF105807"/>
<dbReference type="BioCyc" id="MetaCyc:ENSG00000156795-MONOMER"/>
<dbReference type="BRENDA" id="3.5.1.122">
    <property type="organism ID" value="2681"/>
</dbReference>
<dbReference type="PathwayCommons" id="Q96HA8"/>
<dbReference type="SignaLink" id="Q96HA8"/>
<dbReference type="BioGRID-ORCS" id="55093">
    <property type="hits" value="13 hits in 1157 CRISPR screens"/>
</dbReference>
<dbReference type="ChiTaRS" id="WDYHV1">
    <property type="organism name" value="human"/>
</dbReference>
<dbReference type="EvolutionaryTrace" id="Q96HA8"/>
<dbReference type="GeneWiki" id="C8orf32"/>
<dbReference type="GenomeRNAi" id="55093"/>
<dbReference type="Pharos" id="Q96HA8">
    <property type="development level" value="Tbio"/>
</dbReference>
<dbReference type="PRO" id="PR:Q96HA8"/>
<dbReference type="Proteomes" id="UP000005640">
    <property type="component" value="Chromosome 8"/>
</dbReference>
<dbReference type="RNAct" id="Q96HA8">
    <property type="molecule type" value="protein"/>
</dbReference>
<dbReference type="Bgee" id="ENSG00000156795">
    <property type="expression patterns" value="Expressed in cortical plate and 189 other cell types or tissues"/>
</dbReference>
<dbReference type="ExpressionAtlas" id="Q96HA8">
    <property type="expression patterns" value="baseline and differential"/>
</dbReference>
<dbReference type="GO" id="GO:0005829">
    <property type="term" value="C:cytosol"/>
    <property type="evidence" value="ECO:0000250"/>
    <property type="project" value="UniProtKB"/>
</dbReference>
<dbReference type="GO" id="GO:0005634">
    <property type="term" value="C:nucleus"/>
    <property type="evidence" value="ECO:0000250"/>
    <property type="project" value="UniProtKB"/>
</dbReference>
<dbReference type="GO" id="GO:0008418">
    <property type="term" value="F:protein-N-terminal asparagine amidohydrolase activity"/>
    <property type="evidence" value="ECO:0007669"/>
    <property type="project" value="InterPro"/>
</dbReference>
<dbReference type="GO" id="GO:0070773">
    <property type="term" value="F:protein-N-terminal glutamine amidohydrolase activity"/>
    <property type="evidence" value="ECO:0000250"/>
    <property type="project" value="UniProtKB"/>
</dbReference>
<dbReference type="GO" id="GO:0036211">
    <property type="term" value="P:protein modification process"/>
    <property type="evidence" value="ECO:0000250"/>
    <property type="project" value="UniProtKB"/>
</dbReference>
<dbReference type="FunFam" id="3.10.620.10:FF:000001">
    <property type="entry name" value="Blast:Protein N-terminal glutamine amidohydrolase"/>
    <property type="match status" value="1"/>
</dbReference>
<dbReference type="Gene3D" id="3.10.620.10">
    <property type="entry name" value="Protein N-terminal glutamine amidohydrolase, alpha beta roll"/>
    <property type="match status" value="1"/>
</dbReference>
<dbReference type="InterPro" id="IPR037132">
    <property type="entry name" value="N_Gln_amidohydro_ab_roll_sf"/>
</dbReference>
<dbReference type="InterPro" id="IPR039733">
    <property type="entry name" value="NTAQ1"/>
</dbReference>
<dbReference type="InterPro" id="IPR023128">
    <property type="entry name" value="Prot_N_Gln_amidohydro_ab_roll"/>
</dbReference>
<dbReference type="PANTHER" id="PTHR13035">
    <property type="entry name" value="PROTEIN N-TERMINAL GLUTAMINE AMIDOHYDROLASE"/>
    <property type="match status" value="1"/>
</dbReference>
<dbReference type="PANTHER" id="PTHR13035:SF0">
    <property type="entry name" value="PROTEIN N-TERMINAL GLUTAMINE AMIDOHYDROLASE"/>
    <property type="match status" value="1"/>
</dbReference>
<dbReference type="Pfam" id="PF09764">
    <property type="entry name" value="Nt_Gln_amidase"/>
    <property type="match status" value="1"/>
</dbReference>
<name>NTAQ1_HUMAN</name>
<sequence length="205" mass="23680">MEGNGPAAVHYQPASPPRDACVYSSCYCEENIWKLCEYIKNHDQYPLEECYAVFISNERKMIPIWKQQARPGDGPVIWDYHVVLLHVSSGGQNFIYDLDTVLPFPCLFDTYVEDAFKSDDDIHPQFRRKFRVIRADSYLKNFASDRSHMKDSSGNWREPPPPYPCIETGDSKMNLNDFISMDPKVGWGAVYTLSEFTHRFGSKNC</sequence>
<accession>Q96HA8</accession>
<accession>B4DE68</accession>
<accession>Q9NW95</accession>
<gene>
    <name evidence="7" type="primary">NTAQ1</name>
    <name type="synonym">C8orf32</name>
    <name type="synonym">WDYHV1</name>
</gene>
<keyword id="KW-0002">3D-structure</keyword>
<keyword id="KW-0025">Alternative splicing</keyword>
<keyword id="KW-0963">Cytoplasm</keyword>
<keyword id="KW-0378">Hydrolase</keyword>
<keyword id="KW-0539">Nucleus</keyword>
<keyword id="KW-1267">Proteomics identification</keyword>
<keyword id="KW-1185">Reference proteome</keyword>
<organism>
    <name type="scientific">Homo sapiens</name>
    <name type="common">Human</name>
    <dbReference type="NCBI Taxonomy" id="9606"/>
    <lineage>
        <taxon>Eukaryota</taxon>
        <taxon>Metazoa</taxon>
        <taxon>Chordata</taxon>
        <taxon>Craniata</taxon>
        <taxon>Vertebrata</taxon>
        <taxon>Euteleostomi</taxon>
        <taxon>Mammalia</taxon>
        <taxon>Eutheria</taxon>
        <taxon>Euarchontoglires</taxon>
        <taxon>Primates</taxon>
        <taxon>Haplorrhini</taxon>
        <taxon>Catarrhini</taxon>
        <taxon>Hominidae</taxon>
        <taxon>Homo</taxon>
    </lineage>
</organism>
<comment type="function">
    <text evidence="2">Mediates the side-chain deamidation of N-terminal glutamine residues to glutamate, an important step in N-end rule pathway of protein degradation. Conversion of the resulting N-terminal glutamine to glutamate renders the protein susceptible to arginylation, polyubiquitination and degradation as specified by the N-end rule. Does not act on substrates with internal or C-terminal glutamine and does not act on non-glutamine residues in any position. Does not deaminate acetylated N-terminal glutamine. With the exception of proline, all tested second-position residues on substrate peptides do not greatly influence the activity. In contrast, a proline at position 2, virtually abolishes deamidation of N-terminal glutamine.</text>
</comment>
<comment type="catalytic activity">
    <reaction evidence="2">
        <text>N-terminal L-glutaminyl-[protein] + H2O = N-terminal L-glutamyl-[protein] + NH4(+)</text>
        <dbReference type="Rhea" id="RHEA:50680"/>
        <dbReference type="Rhea" id="RHEA-COMP:12668"/>
        <dbReference type="Rhea" id="RHEA-COMP:12777"/>
        <dbReference type="ChEBI" id="CHEBI:15377"/>
        <dbReference type="ChEBI" id="CHEBI:28938"/>
        <dbReference type="ChEBI" id="CHEBI:64721"/>
        <dbReference type="ChEBI" id="CHEBI:64722"/>
        <dbReference type="EC" id="3.5.1.122"/>
    </reaction>
</comment>
<comment type="subunit">
    <text evidence="4">Monomer.</text>
</comment>
<comment type="interaction">
    <interactant intactId="EBI-741158">
        <id>Q96HA8</id>
    </interactant>
    <interactant intactId="EBI-5463075">
        <id>Q4LEZ3</id>
        <label>AARD</label>
    </interactant>
    <organismsDiffer>false</organismsDiffer>
    <experiments>3</experiments>
</comment>
<comment type="interaction">
    <interactant intactId="EBI-741158">
        <id>Q96HA8</id>
    </interactant>
    <interactant intactId="EBI-1045357">
        <id>Q9NPJ3</id>
        <label>ACOT13</label>
    </interactant>
    <organismsDiffer>false</organismsDiffer>
    <experiments>3</experiments>
</comment>
<comment type="interaction">
    <interactant intactId="EBI-741158">
        <id>Q96HA8</id>
    </interactant>
    <interactant intactId="EBI-353944">
        <id>P60709</id>
        <label>ACTB</label>
    </interactant>
    <organismsDiffer>false</organismsDiffer>
    <experiments>6</experiments>
</comment>
<comment type="interaction">
    <interactant intactId="EBI-741158">
        <id>Q96HA8</id>
    </interactant>
    <interactant intactId="EBI-351292">
        <id>P63261</id>
        <label>ACTG1</label>
    </interactant>
    <organismsDiffer>false</organismsDiffer>
    <experiments>7</experiments>
</comment>
<comment type="interaction">
    <interactant intactId="EBI-741158">
        <id>Q96HA8</id>
    </interactant>
    <interactant intactId="EBI-77797">
        <id>P35609</id>
        <label>ACTN2</label>
    </interactant>
    <organismsDiffer>false</organismsDiffer>
    <experiments>3</experiments>
</comment>
<comment type="interaction">
    <interactant intactId="EBI-741158">
        <id>Q96HA8</id>
    </interactant>
    <interactant intactId="EBI-742064">
        <id>Q03154</id>
        <label>ACY1</label>
    </interactant>
    <organismsDiffer>false</organismsDiffer>
    <experiments>3</experiments>
</comment>
<comment type="interaction">
    <interactant intactId="EBI-741158">
        <id>Q96HA8</id>
    </interactant>
    <interactant intactId="EBI-10173507">
        <id>Q6UY14-3</id>
        <label>ADAMTSL4</label>
    </interactant>
    <organismsDiffer>false</organismsDiffer>
    <experiments>3</experiments>
</comment>
<comment type="interaction">
    <interactant intactId="EBI-741158">
        <id>Q96HA8</id>
    </interactant>
    <interactant intactId="EBI-712648">
        <id>O95994</id>
        <label>AGR2</label>
    </interactant>
    <organismsDiffer>false</organismsDiffer>
    <experiments>3</experiments>
</comment>
<comment type="interaction">
    <interactant intactId="EBI-741158">
        <id>Q96HA8</id>
    </interactant>
    <interactant intactId="EBI-3925742">
        <id>Q8TD06</id>
        <label>AGR3</label>
    </interactant>
    <organismsDiffer>false</organismsDiffer>
    <experiments>3</experiments>
</comment>
<comment type="interaction">
    <interactant intactId="EBI-741158">
        <id>Q96HA8</id>
    </interactant>
    <interactant intactId="EBI-745226">
        <id>Q13155</id>
        <label>AIMP2</label>
    </interactant>
    <organismsDiffer>false</organismsDiffer>
    <experiments>3</experiments>
</comment>
<comment type="interaction">
    <interactant intactId="EBI-741158">
        <id>Q96HA8</id>
    </interactant>
    <interactant intactId="EBI-742928">
        <id>Q53H80</id>
        <label>AKIRIN2</label>
    </interactant>
    <organismsDiffer>false</organismsDiffer>
    <experiments>3</experiments>
</comment>
<comment type="interaction">
    <interactant intactId="EBI-741158">
        <id>Q96HA8</id>
    </interactant>
    <interactant intactId="EBI-17286414">
        <id>A2BDD9</id>
        <label>AMOT</label>
    </interactant>
    <organismsDiffer>false</organismsDiffer>
    <experiments>3</experiments>
</comment>
<comment type="interaction">
    <interactant intactId="EBI-741158">
        <id>Q96HA8</id>
    </interactant>
    <interactant intactId="EBI-3891843">
        <id>Q4VCS5-2</id>
        <label>AMOT</label>
    </interactant>
    <organismsDiffer>false</organismsDiffer>
    <experiments>3</experiments>
</comment>
<comment type="interaction">
    <interactant intactId="EBI-741158">
        <id>Q96HA8</id>
    </interactant>
    <interactant intactId="EBI-10187270">
        <id>Q9Y2J4-4</id>
        <label>AMOTL2</label>
    </interactant>
    <organismsDiffer>false</organismsDiffer>
    <experiments>3</experiments>
</comment>
<comment type="interaction">
    <interactant intactId="EBI-741158">
        <id>Q96HA8</id>
    </interactant>
    <interactant intactId="EBI-11957578">
        <id>Q01433-2</id>
        <label>AMPD2</label>
    </interactant>
    <organismsDiffer>false</organismsDiffer>
    <experiments>3</experiments>
</comment>
<comment type="interaction">
    <interactant intactId="EBI-741158">
        <id>Q96HA8</id>
    </interactant>
    <interactant intactId="EBI-17183751">
        <id>X5D778</id>
        <label>ANKRD11</label>
    </interactant>
    <organismsDiffer>false</organismsDiffer>
    <experiments>3</experiments>
</comment>
<comment type="interaction">
    <interactant intactId="EBI-741158">
        <id>Q96HA8</id>
    </interactant>
    <interactant intactId="EBI-12170453">
        <id>Q8N2N9-4</id>
        <label>ANKRD36B</label>
    </interactant>
    <organismsDiffer>false</organismsDiffer>
    <experiments>3</experiments>
</comment>
<comment type="interaction">
    <interactant intactId="EBI-741158">
        <id>Q96HA8</id>
    </interactant>
    <interactant intactId="EBI-12826295">
        <id>P19801</id>
        <label>AOC1</label>
    </interactant>
    <organismsDiffer>false</organismsDiffer>
    <experiments>3</experiments>
</comment>
<comment type="interaction">
    <interactant intactId="EBI-741158">
        <id>Q96HA8</id>
    </interactant>
    <interactant intactId="EBI-359248">
        <id>Q96GX9</id>
        <label>APIP</label>
    </interactant>
    <organismsDiffer>false</organismsDiffer>
    <experiments>5</experiments>
</comment>
<comment type="interaction">
    <interactant intactId="EBI-741158">
        <id>Q96HA8</id>
    </interactant>
    <interactant intactId="EBI-11957452">
        <id>Q4LE39-3</id>
        <label>ARID4B</label>
    </interactant>
    <organismsDiffer>false</organismsDiffer>
    <experiments>3</experiments>
</comment>
<comment type="interaction">
    <interactant intactId="EBI-741158">
        <id>Q96HA8</id>
    </interactant>
    <interactant intactId="EBI-714543">
        <id>Q15041</id>
        <label>ARL6IP1</label>
    </interactant>
    <organismsDiffer>false</organismsDiffer>
    <experiments>3</experiments>
</comment>
<comment type="interaction">
    <interactant intactId="EBI-741158">
        <id>Q96HA8</id>
    </interactant>
    <interactant intactId="EBI-750131">
        <id>P04424</id>
        <label>ASL</label>
    </interactant>
    <organismsDiffer>false</organismsDiffer>
    <experiments>7</experiments>
</comment>
<comment type="interaction">
    <interactant intactId="EBI-741158">
        <id>Q96HA8</id>
    </interactant>
    <interactant intactId="EBI-711802">
        <id>O75348</id>
        <label>ATP6V1G1</label>
    </interactant>
    <organismsDiffer>false</organismsDiffer>
    <experiments>3</experiments>
</comment>
<comment type="interaction">
    <interactant intactId="EBI-741158">
        <id>Q96HA8</id>
    </interactant>
    <interactant intactId="EBI-11977289">
        <id>Q9H503-2</id>
        <label>BANF2</label>
    </interactant>
    <organismsDiffer>false</organismsDiffer>
    <experiments>3</experiments>
</comment>
<comment type="interaction">
    <interactant intactId="EBI-741158">
        <id>Q96HA8</id>
    </interactant>
    <interactant intactId="EBI-724373">
        <id>Q7L4P6</id>
        <label>BEND5</label>
    </interactant>
    <organismsDiffer>false</organismsDiffer>
    <experiments>3</experiments>
</comment>
<comment type="interaction">
    <interactant intactId="EBI-741158">
        <id>Q96HA8</id>
    </interactant>
    <interactant intactId="EBI-514538">
        <id>Q13490</id>
        <label>BIRC2</label>
    </interactant>
    <organismsDiffer>false</organismsDiffer>
    <experiments>8</experiments>
</comment>
<comment type="interaction">
    <interactant intactId="EBI-741158">
        <id>Q96HA8</id>
    </interactant>
    <interactant intactId="EBI-517623">
        <id>Q96CA5</id>
        <label>BIRC7</label>
    </interactant>
    <organismsDiffer>false</organismsDiffer>
    <experiments>3</experiments>
</comment>
<comment type="interaction">
    <interactant intactId="EBI-741158">
        <id>Q96HA8</id>
    </interactant>
    <interactant intactId="EBI-718504">
        <id>Q13867</id>
        <label>BLMH</label>
    </interactant>
    <organismsDiffer>false</organismsDiffer>
    <experiments>4</experiments>
</comment>
<comment type="interaction">
    <interactant intactId="EBI-741158">
        <id>Q96HA8</id>
    </interactant>
    <interactant intactId="EBI-2548012">
        <id>Q9H2G9</id>
        <label>BLZF1</label>
    </interactant>
    <organismsDiffer>false</organismsDiffer>
    <experiments>3</experiments>
</comment>
<comment type="interaction">
    <interactant intactId="EBI-741158">
        <id>Q96HA8</id>
    </interactant>
    <interactant intactId="EBI-12006120">
        <id>A0A087WZT3</id>
        <label>BOLA2-SMG1P6</label>
    </interactant>
    <organismsDiffer>false</organismsDiffer>
    <experiments>3</experiments>
</comment>
<comment type="interaction">
    <interactant intactId="EBI-741158">
        <id>Q96HA8</id>
    </interactant>
    <interactant intactId="EBI-10193358">
        <id>Q96GS4</id>
        <label>BORCS6</label>
    </interactant>
    <organismsDiffer>false</organismsDiffer>
    <experiments>3</experiments>
</comment>
<comment type="interaction">
    <interactant intactId="EBI-741158">
        <id>Q96HA8</id>
    </interactant>
    <interactant intactId="EBI-1055244">
        <id>P59826</id>
        <label>BPIFB3</label>
    </interactant>
    <organismsDiffer>false</organismsDiffer>
    <experiments>3</experiments>
</comment>
<comment type="interaction">
    <interactant intactId="EBI-741158">
        <id>Q96HA8</id>
    </interactant>
    <interactant intactId="EBI-935503">
        <id>Q9H0C5</id>
        <label>BTBD1</label>
    </interactant>
    <organismsDiffer>false</organismsDiffer>
    <experiments>4</experiments>
</comment>
<comment type="interaction">
    <interactant intactId="EBI-741158">
        <id>Q96HA8</id>
    </interactant>
    <interactant intactId="EBI-710091">
        <id>Q9BX70</id>
        <label>BTBD2</label>
    </interactant>
    <organismsDiffer>false</organismsDiffer>
    <experiments>3</experiments>
</comment>
<comment type="interaction">
    <interactant intactId="EBI-741158">
        <id>Q96HA8</id>
    </interactant>
    <interactant intactId="EBI-12012762">
        <id>Q96KE9-2</id>
        <label>BTBD6</label>
    </interactant>
    <organismsDiffer>false</organismsDiffer>
    <experiments>3</experiments>
</comment>
<comment type="interaction">
    <interactant intactId="EBI-741158">
        <id>Q96HA8</id>
    </interactant>
    <interactant intactId="EBI-2874661">
        <id>Q9BV19</id>
        <label>C1orf50</label>
    </interactant>
    <organismsDiffer>false</organismsDiffer>
    <experiments>6</experiments>
</comment>
<comment type="interaction">
    <interactant intactId="EBI-741158">
        <id>Q96HA8</id>
    </interactant>
    <interactant intactId="EBI-1383687">
        <id>Q9UQM7</id>
        <label>CAMK2A</label>
    </interactant>
    <organismsDiffer>false</organismsDiffer>
    <experiments>3</experiments>
</comment>
<comment type="interaction">
    <interactant intactId="EBI-741158">
        <id>Q96HA8</id>
    </interactant>
    <interactant intactId="EBI-5655000">
        <id>P20807</id>
        <label>CAPN3</label>
    </interactant>
    <organismsDiffer>false</organismsDiffer>
    <experiments>3</experiments>
</comment>
<comment type="interaction">
    <interactant intactId="EBI-741158">
        <id>Q96HA8</id>
    </interactant>
    <interactant intactId="EBI-11532021">
        <id>P20807-4</id>
        <label>CAPN3</label>
    </interactant>
    <organismsDiffer>false</organismsDiffer>
    <experiments>3</experiments>
</comment>
<comment type="interaction">
    <interactant intactId="EBI-741158">
        <id>Q96HA8</id>
    </interactant>
    <interactant intactId="EBI-11530605">
        <id>Q9H257-2</id>
        <label>CARD9</label>
    </interactant>
    <organismsDiffer>false</organismsDiffer>
    <experiments>3</experiments>
</comment>
<comment type="interaction">
    <interactant intactId="EBI-741158">
        <id>Q96HA8</id>
    </interactant>
    <interactant intactId="EBI-718729">
        <id>P55212</id>
        <label>CASP6</label>
    </interactant>
    <organismsDiffer>false</organismsDiffer>
    <experiments>3</experiments>
</comment>
<comment type="interaction">
    <interactant intactId="EBI-741158">
        <id>Q96HA8</id>
    </interactant>
    <interactant intactId="EBI-12836558">
        <id>Q5BKX8</id>
        <label>CAVIN4</label>
    </interactant>
    <organismsDiffer>false</organismsDiffer>
    <experiments>3</experiments>
</comment>
<comment type="interaction">
    <interactant intactId="EBI-741158">
        <id>Q96HA8</id>
    </interactant>
    <interactant intactId="EBI-11524851">
        <id>Q8NA61-2</id>
        <label>CBY2</label>
    </interactant>
    <organismsDiffer>false</organismsDiffer>
    <experiments>5</experiments>
</comment>
<comment type="interaction">
    <interactant intactId="EBI-741158">
        <id>Q96HA8</id>
    </interactant>
    <interactant intactId="EBI-10171570">
        <id>Q68D86</id>
        <label>CCDC102B</label>
    </interactant>
    <organismsDiffer>false</organismsDiffer>
    <experiments>4</experiments>
</comment>
<comment type="interaction">
    <interactant intactId="EBI-741158">
        <id>Q96HA8</id>
    </interactant>
    <interactant intactId="EBI-2810325">
        <id>Q96NT0</id>
        <label>CCDC115</label>
    </interactant>
    <organismsDiffer>false</organismsDiffer>
    <experiments>3</experiments>
</comment>
<comment type="interaction">
    <interactant intactId="EBI-741158">
        <id>Q96HA8</id>
    </interactant>
    <interactant intactId="EBI-18398007">
        <id>Q4G0S7</id>
        <label>CCDC152</label>
    </interactant>
    <organismsDiffer>false</organismsDiffer>
    <experiments>3</experiments>
</comment>
<comment type="interaction">
    <interactant intactId="EBI-741158">
        <id>Q96HA8</id>
    </interactant>
    <interactant intactId="EBI-10179526">
        <id>Q52MB2</id>
        <label>CCDC184</label>
    </interactant>
    <organismsDiffer>false</organismsDiffer>
    <experiments>3</experiments>
</comment>
<comment type="interaction">
    <interactant intactId="EBI-741158">
        <id>Q96HA8</id>
    </interactant>
    <interactant intactId="EBI-750686">
        <id>Q8NCU1</id>
        <label>CCDC197</label>
    </interactant>
    <organismsDiffer>false</organismsDiffer>
    <experiments>3</experiments>
</comment>
<comment type="interaction">
    <interactant intactId="EBI-741158">
        <id>Q96HA8</id>
    </interactant>
    <interactant intactId="EBI-10175300">
        <id>Q8TD31-3</id>
        <label>CCHCR1</label>
    </interactant>
    <organismsDiffer>false</organismsDiffer>
    <experiments>3</experiments>
</comment>
<comment type="interaction">
    <interactant intactId="EBI-741158">
        <id>Q96HA8</id>
    </interactant>
    <interactant intactId="EBI-745269">
        <id>Q9NPC3</id>
        <label>CCNB1IP1</label>
    </interactant>
    <organismsDiffer>false</organismsDiffer>
    <experiments>3</experiments>
</comment>
<comment type="interaction">
    <interactant intactId="EBI-741158">
        <id>Q96HA8</id>
    </interactant>
    <interactant intactId="EBI-13320645">
        <id>P20273-5</id>
        <label>CD22</label>
    </interactant>
    <organismsDiffer>false</organismsDiffer>
    <experiments>3</experiments>
</comment>
<comment type="interaction">
    <interactant intactId="EBI-741158">
        <id>Q96HA8</id>
    </interactant>
    <interactant intactId="EBI-9250559">
        <id>P32320</id>
        <label>CDA</label>
    </interactant>
    <organismsDiffer>false</organismsDiffer>
    <experiments>9</experiments>
</comment>
<comment type="interaction">
    <interactant intactId="EBI-741158">
        <id>Q96HA8</id>
    </interactant>
    <interactant intactId="EBI-979174">
        <id>Q53HL2</id>
        <label>CDCA8</label>
    </interactant>
    <organismsDiffer>false</organismsDiffer>
    <experiments>3</experiments>
</comment>
<comment type="interaction">
    <interactant intactId="EBI-741158">
        <id>Q96HA8</id>
    </interactant>
    <interactant intactId="EBI-1052532">
        <id>O14519</id>
        <label>CDK2AP1</label>
    </interactant>
    <organismsDiffer>false</organismsDiffer>
    <experiments>3</experiments>
</comment>
<comment type="interaction">
    <interactant intactId="EBI-741158">
        <id>Q96HA8</id>
    </interactant>
    <interactant intactId="EBI-10038935">
        <id>Q96HQ2</id>
        <label>CDKN2AIPNL</label>
    </interactant>
    <organismsDiffer>false</organismsDiffer>
    <experiments>3</experiments>
</comment>
<comment type="interaction">
    <interactant intactId="EBI-741158">
        <id>Q96HA8</id>
    </interactant>
    <interactant intactId="EBI-1181367">
        <id>Q01850</id>
        <label>CDR2</label>
    </interactant>
    <organismsDiffer>false</organismsDiffer>
    <experiments>4</experiments>
</comment>
<comment type="interaction">
    <interactant intactId="EBI-741158">
        <id>Q96HA8</id>
    </interactant>
    <interactant intactId="EBI-10250303">
        <id>Q6IPU0</id>
        <label>CENPP</label>
    </interactant>
    <organismsDiffer>false</organismsDiffer>
    <experiments>3</experiments>
</comment>
<comment type="interaction">
    <interactant intactId="EBI-741158">
        <id>Q96HA8</id>
    </interactant>
    <interactant intactId="EBI-12950757">
        <id>Q9Y4F5-3</id>
        <label>CEP170B</label>
    </interactant>
    <organismsDiffer>false</organismsDiffer>
    <experiments>3</experiments>
</comment>
<comment type="interaction">
    <interactant intactId="EBI-741158">
        <id>Q96HA8</id>
    </interactant>
    <interactant intactId="EBI-747776">
        <id>Q53EZ4</id>
        <label>CEP55</label>
    </interactant>
    <organismsDiffer>false</organismsDiffer>
    <experiments>5</experiments>
</comment>
<comment type="interaction">
    <interactant intactId="EBI-741158">
        <id>Q96HA8</id>
    </interactant>
    <interactant intactId="EBI-739624">
        <id>Q8NHQ1</id>
        <label>CEP70</label>
    </interactant>
    <organismsDiffer>false</organismsDiffer>
    <experiments>3</experiments>
</comment>
<comment type="interaction">
    <interactant intactId="EBI-741158">
        <id>Q96HA8</id>
    </interactant>
    <interactant intactId="EBI-12368239">
        <id>Q6P2H3-3</id>
        <label>CEP85</label>
    </interactant>
    <organismsDiffer>false</organismsDiffer>
    <experiments>3</experiments>
</comment>
<comment type="interaction">
    <interactant intactId="EBI-741158">
        <id>Q96HA8</id>
    </interactant>
    <interactant intactId="EBI-723153">
        <id>Q9UFW8</id>
        <label>CGGBP1</label>
    </interactant>
    <organismsDiffer>false</organismsDiffer>
    <experiments>3</experiments>
</comment>
<comment type="interaction">
    <interactant intactId="EBI-741158">
        <id>Q96HA8</id>
    </interactant>
    <interactant intactId="EBI-743375">
        <id>Q9NX63</id>
        <label>CHCHD3</label>
    </interactant>
    <organismsDiffer>false</organismsDiffer>
    <experiments>3</experiments>
</comment>
<comment type="interaction">
    <interactant intactId="EBI-741158">
        <id>Q96HA8</id>
    </interactant>
    <interactant intactId="EBI-12178895">
        <id>Q9BY43-2</id>
        <label>CHMP4A</label>
    </interactant>
    <organismsDiffer>false</organismsDiffer>
    <experiments>3</experiments>
</comment>
<comment type="interaction">
    <interactant intactId="EBI-741158">
        <id>Q96HA8</id>
    </interactant>
    <interactant intactId="EBI-11522780">
        <id>Q96DZ9-2</id>
        <label>CMTM5</label>
    </interactant>
    <organismsDiffer>false</organismsDiffer>
    <experiments>3</experiments>
</comment>
<comment type="interaction">
    <interactant intactId="EBI-741158">
        <id>Q96HA8</id>
    </interactant>
    <interactant intactId="EBI-3866319">
        <id>Q9Y2V7</id>
        <label>COG6</label>
    </interactant>
    <organismsDiffer>false</organismsDiffer>
    <experiments>5</experiments>
</comment>
<comment type="interaction">
    <interactant intactId="EBI-741158">
        <id>Q96HA8</id>
    </interactant>
    <interactant intactId="EBI-945751">
        <id>P38432</id>
        <label>COIL</label>
    </interactant>
    <organismsDiffer>false</organismsDiffer>
    <experiments>3</experiments>
</comment>
<comment type="interaction">
    <interactant intactId="EBI-741158">
        <id>Q96HA8</id>
    </interactant>
    <interactant intactId="EBI-6875961">
        <id>P02489</id>
        <label>CRYAA</label>
    </interactant>
    <organismsDiffer>false</organismsDiffer>
    <experiments>7</experiments>
</comment>
<comment type="interaction">
    <interactant intactId="EBI-741158">
        <id>Q96HA8</id>
    </interactant>
    <interactant intactId="EBI-348169">
        <id>P67870</id>
        <label>CSNK2B</label>
    </interactant>
    <organismsDiffer>false</organismsDiffer>
    <experiments>3</experiments>
</comment>
<comment type="interaction">
    <interactant intactId="EBI-741158">
        <id>Q96HA8</id>
    </interactant>
    <interactant intactId="EBI-12051833">
        <id>Q5HYN5</id>
        <label>CT45A1</label>
    </interactant>
    <organismsDiffer>false</organismsDiffer>
    <experiments>3</experiments>
</comment>
<comment type="interaction">
    <interactant intactId="EBI-741158">
        <id>Q96HA8</id>
    </interactant>
    <interactant intactId="EBI-1188472">
        <id>P78358</id>
        <label>CTAG1B</label>
    </interactant>
    <organismsDiffer>false</organismsDiffer>
    <experiments>3</experiments>
</comment>
<comment type="interaction">
    <interactant intactId="EBI-741158">
        <id>Q96HA8</id>
    </interactant>
    <interactant intactId="EBI-749763">
        <id>P32929</id>
        <label>CTH</label>
    </interactant>
    <organismsDiffer>false</organismsDiffer>
    <experiments>3</experiments>
</comment>
<comment type="interaction">
    <interactant intactId="EBI-741158">
        <id>Q96HA8</id>
    </interactant>
    <interactant intactId="EBI-5838167">
        <id>Q9NWM3</id>
        <label>CUEDC1</label>
    </interactant>
    <organismsDiffer>false</organismsDiffer>
    <experiments>3</experiments>
</comment>
<comment type="interaction">
    <interactant intactId="EBI-741158">
        <id>Q96HA8</id>
    </interactant>
    <interactant intactId="EBI-714918">
        <id>Q9NTM9</id>
        <label>CUTC</label>
    </interactant>
    <organismsDiffer>false</organismsDiffer>
    <experiments>3</experiments>
</comment>
<comment type="interaction">
    <interactant intactId="EBI-741158">
        <id>Q96HA8</id>
    </interactant>
    <interactant intactId="EBI-3867333">
        <id>A8MQ03</id>
        <label>CYSRT1</label>
    </interactant>
    <organismsDiffer>false</organismsDiffer>
    <experiments>3</experiments>
</comment>
<comment type="interaction">
    <interactant intactId="EBI-741158">
        <id>Q96HA8</id>
    </interactant>
    <interactant intactId="EBI-7875264">
        <id>O75553</id>
        <label>DAB1</label>
    </interactant>
    <organismsDiffer>false</organismsDiffer>
    <experiments>3</experiments>
</comment>
<comment type="interaction">
    <interactant intactId="EBI-741158">
        <id>Q96HA8</id>
    </interactant>
    <interactant intactId="EBI-723569">
        <id>Q9H773</id>
        <label>DCTPP1</label>
    </interactant>
    <organismsDiffer>false</organismsDiffer>
    <experiments>5</experiments>
</comment>
<comment type="interaction">
    <interactant intactId="EBI-741158">
        <id>Q96HA8</id>
    </interactant>
    <interactant intactId="EBI-748597">
        <id>Q05D60</id>
        <label>DEUP1</label>
    </interactant>
    <organismsDiffer>false</organismsDiffer>
    <experiments>3</experiments>
</comment>
<comment type="interaction">
    <interactant intactId="EBI-741158">
        <id>Q96HA8</id>
    </interactant>
    <interactant intactId="EBI-741925">
        <id>P49366</id>
        <label>DHPS</label>
    </interactant>
    <organismsDiffer>false</organismsDiffer>
    <experiments>3</experiments>
</comment>
<comment type="interaction">
    <interactant intactId="EBI-741158">
        <id>Q96HA8</id>
    </interactant>
    <interactant intactId="EBI-742362">
        <id>O96015</id>
        <label>DNAL4</label>
    </interactant>
    <organismsDiffer>false</organismsDiffer>
    <experiments>3</experiments>
</comment>
<comment type="interaction">
    <interactant intactId="EBI-741158">
        <id>Q96HA8</id>
    </interactant>
    <interactant intactId="EBI-1176455">
        <id>P63172</id>
        <label>DYNLT1</label>
    </interactant>
    <organismsDiffer>false</organismsDiffer>
    <experiments>3</experiments>
</comment>
<comment type="interaction">
    <interactant intactId="EBI-741158">
        <id>Q96HA8</id>
    </interactant>
    <interactant intactId="EBI-2949647">
        <id>Q8WWZ3</id>
        <label>EDARADD</label>
    </interactant>
    <organismsDiffer>false</organismsDiffer>
    <experiments>4</experiments>
</comment>
<comment type="interaction">
    <interactant intactId="EBI-741158">
        <id>Q96HA8</id>
    </interactant>
    <interactant intactId="EBI-1175354">
        <id>Q9H6Z9</id>
        <label>EGLN3</label>
    </interactant>
    <organismsDiffer>false</organismsDiffer>
    <experiments>3</experiments>
</comment>
<comment type="interaction">
    <interactant intactId="EBI-741158">
        <id>Q96HA8</id>
    </interactant>
    <interactant intactId="EBI-491065">
        <id>Q14232</id>
        <label>EIF2B1</label>
    </interactant>
    <organismsDiffer>false</organismsDiffer>
    <experiments>7</experiments>
</comment>
<comment type="interaction">
    <interactant intactId="EBI-741158">
        <id>Q96HA8</id>
    </interactant>
    <interactant intactId="EBI-12012124">
        <id>Q04637-9</id>
        <label>EIF4G1</label>
    </interactant>
    <organismsDiffer>false</organismsDiffer>
    <experiments>3</experiments>
</comment>
<comment type="interaction">
    <interactant intactId="EBI-741158">
        <id>Q96HA8</id>
    </interactant>
    <interactant intactId="EBI-3197883">
        <id>Q9NT22</id>
        <label>EMILIN3</label>
    </interactant>
    <organismsDiffer>false</organismsDiffer>
    <experiments>3</experiments>
</comment>
<comment type="interaction">
    <interactant intactId="EBI-741158">
        <id>Q96HA8</id>
    </interactant>
    <interactant intactId="EBI-12089140">
        <id>A0A0A0MR80</id>
        <label>EP400</label>
    </interactant>
    <organismsDiffer>false</organismsDiffer>
    <experiments>3</experiments>
</comment>
<comment type="interaction">
    <interactant intactId="EBI-741158">
        <id>Q96HA8</id>
    </interactant>
    <interactant intactId="EBI-12866582">
        <id>I6L9I8</id>
        <label>EPN3</label>
    </interactant>
    <organismsDiffer>false</organismsDiffer>
    <experiments>3</experiments>
</comment>
<comment type="interaction">
    <interactant intactId="EBI-741158">
        <id>Q96HA8</id>
    </interactant>
    <interactant intactId="EBI-1372759">
        <id>P41212</id>
        <label>ETV6</label>
    </interactant>
    <organismsDiffer>false</organismsDiffer>
    <experiments>3</experiments>
</comment>
<comment type="interaction">
    <interactant intactId="EBI-741158">
        <id>Q96HA8</id>
    </interactant>
    <interactant intactId="EBI-371922">
        <id>Q96B26</id>
        <label>EXOSC8</label>
    </interactant>
    <organismsDiffer>false</organismsDiffer>
    <experiments>3</experiments>
</comment>
<comment type="interaction">
    <interactant intactId="EBI-741158">
        <id>Q96HA8</id>
    </interactant>
    <interactant intactId="EBI-373319">
        <id>Q96C01</id>
        <label>FAM136A</label>
    </interactant>
    <organismsDiffer>false</organismsDiffer>
    <experiments>3</experiments>
</comment>
<comment type="interaction">
    <interactant intactId="EBI-741158">
        <id>Q96HA8</id>
    </interactant>
    <interactant intactId="EBI-10237116">
        <id>Q5TYM5</id>
        <label>FAM72A</label>
    </interactant>
    <organismsDiffer>false</organismsDiffer>
    <experiments>3</experiments>
</comment>
<comment type="interaction">
    <interactant intactId="EBI-741158">
        <id>Q96HA8</id>
    </interactant>
    <interactant intactId="EBI-18397873">
        <id>Q6L9T8</id>
        <label>FAM72D</label>
    </interactant>
    <organismsDiffer>false</organismsDiffer>
    <experiments>3</experiments>
</comment>
<comment type="interaction">
    <interactant intactId="EBI-741158">
        <id>Q96HA8</id>
    </interactant>
    <interactant intactId="EBI-744771">
        <id>O75344</id>
        <label>FKBP6</label>
    </interactant>
    <organismsDiffer>false</organismsDiffer>
    <experiments>3</experiments>
</comment>
<comment type="interaction">
    <interactant intactId="EBI-741158">
        <id>Q96HA8</id>
    </interactant>
    <interactant intactId="EBI-10180219">
        <id>Q6NZ44</id>
        <label>FTH1</label>
    </interactant>
    <organismsDiffer>false</organismsDiffer>
    <experiments>3</experiments>
</comment>
<comment type="interaction">
    <interactant intactId="EBI-741158">
        <id>Q96HA8</id>
    </interactant>
    <interactant intactId="EBI-713279">
        <id>P02792</id>
        <label>FTL</label>
    </interactant>
    <organismsDiffer>false</organismsDiffer>
    <experiments>3</experiments>
</comment>
<comment type="interaction">
    <interactant intactId="EBI-741158">
        <id>Q96HA8</id>
    </interactant>
    <interactant intactId="EBI-372506">
        <id>Q8TAE8</id>
        <label>GADD45GIP1</label>
    </interactant>
    <organismsDiffer>false</organismsDiffer>
    <experiments>3</experiments>
</comment>
<comment type="interaction">
    <interactant intactId="EBI-741158">
        <id>Q96HA8</id>
    </interactant>
    <interactant intactId="EBI-2683717">
        <id>O60861</id>
        <label>GAS7</label>
    </interactant>
    <organismsDiffer>false</organismsDiffer>
    <experiments>4</experiments>
</comment>
<comment type="interaction">
    <interactant intactId="EBI-741158">
        <id>Q96HA8</id>
    </interactant>
    <interactant intactId="EBI-11745923">
        <id>O60861-1</id>
        <label>GAS7</label>
    </interactant>
    <organismsDiffer>false</organismsDiffer>
    <experiments>5</experiments>
</comment>
<comment type="interaction">
    <interactant intactId="EBI-741158">
        <id>Q96HA8</id>
    </interactant>
    <interactant intactId="EBI-17857617">
        <id>Q5JQS6</id>
        <label>GCSAML</label>
    </interactant>
    <organismsDiffer>false</organismsDiffer>
    <experiments>3</experiments>
</comment>
<comment type="interaction">
    <interactant intactId="EBI-741158">
        <id>Q96HA8</id>
    </interactant>
    <interactant intactId="EBI-744302">
        <id>P14136</id>
        <label>GFAP</label>
    </interactant>
    <organismsDiffer>false</organismsDiffer>
    <experiments>3</experiments>
</comment>
<comment type="interaction">
    <interactant intactId="EBI-741158">
        <id>Q96HA8</id>
    </interactant>
    <interactant intactId="EBI-746373">
        <id>O60547</id>
        <label>GMDS</label>
    </interactant>
    <organismsDiffer>false</organismsDiffer>
    <experiments>6</experiments>
</comment>
<comment type="interaction">
    <interactant intactId="EBI-741158">
        <id>Q96HA8</id>
    </interactant>
    <interactant intactId="EBI-1046668">
        <id>P63215</id>
        <label>GNG3</label>
    </interactant>
    <organismsDiffer>false</organismsDiffer>
    <experiments>3</experiments>
</comment>
<comment type="interaction">
    <interactant intactId="EBI-741158">
        <id>Q96HA8</id>
    </interactant>
    <interactant intactId="EBI-744239">
        <id>Q14749</id>
        <label>GNMT</label>
    </interactant>
    <organismsDiffer>false</organismsDiffer>
    <experiments>5</experiments>
</comment>
<comment type="interaction">
    <interactant intactId="EBI-741158">
        <id>Q96HA8</id>
    </interactant>
    <interactant intactId="EBI-12197555">
        <id>Q8TDQ7-2</id>
        <label>GNPDA2</label>
    </interactant>
    <organismsDiffer>false</organismsDiffer>
    <experiments>3</experiments>
</comment>
<comment type="interaction">
    <interactant intactId="EBI-741158">
        <id>Q96HA8</id>
    </interactant>
    <interactant intactId="EBI-618309">
        <id>Q08379</id>
        <label>GOLGA2</label>
    </interactant>
    <organismsDiffer>false</organismsDiffer>
    <experiments>8</experiments>
</comment>
<comment type="interaction">
    <interactant intactId="EBI-741158">
        <id>Q96HA8</id>
    </interactant>
    <interactant intactId="EBI-5916454">
        <id>A6NEM1</id>
        <label>GOLGA6L9</label>
    </interactant>
    <organismsDiffer>false</organismsDiffer>
    <experiments>3</experiments>
</comment>
<comment type="interaction">
    <interactant intactId="EBI-741158">
        <id>Q96HA8</id>
    </interactant>
    <interactant intactId="EBI-749411">
        <id>Q96SL4</id>
        <label>GPX7</label>
    </interactant>
    <organismsDiffer>false</organismsDiffer>
    <experiments>3</experiments>
</comment>
<comment type="interaction">
    <interactant intactId="EBI-741158">
        <id>Q96HA8</id>
    </interactant>
    <interactant intactId="EBI-10962409">
        <id>Q6IC98</id>
        <label>GRAMD4</label>
    </interactant>
    <organismsDiffer>false</organismsDiffer>
    <experiments>3</experiments>
</comment>
<comment type="interaction">
    <interactant intactId="EBI-741158">
        <id>Q96HA8</id>
    </interactant>
    <interactant intactId="EBI-752440">
        <id>O15217</id>
        <label>GSTA4</label>
    </interactant>
    <organismsDiffer>false</organismsDiffer>
    <experiments>3</experiments>
</comment>
<comment type="interaction">
    <interactant intactId="EBI-741158">
        <id>Q96HA8</id>
    </interactant>
    <interactant intactId="EBI-10194609">
        <id>Q9H4Y5</id>
        <label>GSTO2</label>
    </interactant>
    <organismsDiffer>false</organismsDiffer>
    <experiments>3</experiments>
</comment>
<comment type="interaction">
    <interactant intactId="EBI-741158">
        <id>Q96HA8</id>
    </interactant>
    <interactant intactId="EBI-8469755">
        <id>Q6P1K8</id>
        <label>GTF2H2C_2</label>
    </interactant>
    <organismsDiffer>false</organismsDiffer>
    <experiments>3</experiments>
</comment>
<comment type="interaction">
    <interactant intactId="EBI-741158">
        <id>Q96HA8</id>
    </interactant>
    <interactant intactId="EBI-6447217">
        <id>O75409</id>
        <label>H2AP</label>
    </interactant>
    <organismsDiffer>false</organismsDiffer>
    <experiments>3</experiments>
</comment>
<comment type="interaction">
    <interactant intactId="EBI-741158">
        <id>Q96HA8</id>
    </interactant>
    <interactant intactId="EBI-2558143">
        <id>Q9BT25</id>
        <label>HAUS8</label>
    </interactant>
    <organismsDiffer>false</organismsDiffer>
    <experiments>3</experiments>
</comment>
<comment type="interaction">
    <interactant intactId="EBI-741158">
        <id>Q96HA8</id>
    </interactant>
    <interactant intactId="EBI-10193656">
        <id>P09105</id>
        <label>HBQ1</label>
    </interactant>
    <organismsDiffer>false</organismsDiffer>
    <experiments>3</experiments>
</comment>
<comment type="interaction">
    <interactant intactId="EBI-741158">
        <id>Q96HA8</id>
    </interactant>
    <interactant intactId="EBI-719843">
        <id>P02008</id>
        <label>HBZ</label>
    </interactant>
    <organismsDiffer>false</organismsDiffer>
    <experiments>3</experiments>
</comment>
<comment type="interaction">
    <interactant intactId="EBI-741158">
        <id>Q96HA8</id>
    </interactant>
    <interactant intactId="EBI-17981660">
        <id>Q86XA9-3</id>
        <label>HEATR5A</label>
    </interactant>
    <organismsDiffer>false</organismsDiffer>
    <experiments>3</experiments>
</comment>
<comment type="interaction">
    <interactant intactId="EBI-741158">
        <id>Q96HA8</id>
    </interactant>
    <interactant intactId="EBI-10180762">
        <id>V9HW60</id>
        <label>HEL-S-182mP</label>
    </interactant>
    <organismsDiffer>false</organismsDiffer>
    <experiments>3</experiments>
</comment>
<comment type="interaction">
    <interactant intactId="EBI-741158">
        <id>Q96HA8</id>
    </interactant>
    <interactant intactId="EBI-3907760">
        <id>Q93099</id>
        <label>HGD</label>
    </interactant>
    <organismsDiffer>false</organismsDiffer>
    <experiments>3</experiments>
</comment>
<comment type="interaction">
    <interactant intactId="EBI-741158">
        <id>Q96HA8</id>
    </interactant>
    <interactant intactId="EBI-12809676">
        <id>A8MV81</id>
        <label>HIGD1C</label>
    </interactant>
    <organismsDiffer>false</organismsDiffer>
    <experiments>3</experiments>
</comment>
<comment type="interaction">
    <interactant intactId="EBI-741158">
        <id>Q96HA8</id>
    </interactant>
    <interactant intactId="EBI-740641">
        <id>Q9NP66</id>
        <label>HMG20A</label>
    </interactant>
    <organismsDiffer>false</organismsDiffer>
    <experiments>5</experiments>
</comment>
<comment type="interaction">
    <interactant intactId="EBI-741158">
        <id>Q96HA8</id>
    </interactant>
    <interactant intactId="EBI-748420">
        <id>Q9NSC5</id>
        <label>HOMER3</label>
    </interactant>
    <organismsDiffer>false</organismsDiffer>
    <experiments>3</experiments>
</comment>
<comment type="interaction">
    <interactant intactId="EBI-741158">
        <id>Q96HA8</id>
    </interactant>
    <interactant intactId="EBI-741308">
        <id>P17509</id>
        <label>HOXB6</label>
    </interactant>
    <organismsDiffer>false</organismsDiffer>
    <experiments>3</experiments>
</comment>
<comment type="interaction">
    <interactant intactId="EBI-741158">
        <id>Q96HA8</id>
    </interactant>
    <interactant intactId="EBI-748210">
        <id>P00492</id>
        <label>HPRT1</label>
    </interactant>
    <organismsDiffer>false</organismsDiffer>
    <experiments>10</experiments>
</comment>
<comment type="interaction">
    <interactant intactId="EBI-741158">
        <id>Q96HA8</id>
    </interactant>
    <interactant intactId="EBI-742664">
        <id>Q9BPX1</id>
        <label>HSD17B14</label>
    </interactant>
    <organismsDiffer>false</organismsDiffer>
    <experiments>13</experiments>
</comment>
<comment type="interaction">
    <interactant intactId="EBI-741158">
        <id>Q96HA8</id>
    </interactant>
    <interactant intactId="EBI-7116203">
        <id>O75031</id>
        <label>HSF2BP</label>
    </interactant>
    <organismsDiffer>false</organismsDiffer>
    <experiments>3</experiments>
</comment>
<comment type="interaction">
    <interactant intactId="EBI-741158">
        <id>Q96HA8</id>
    </interactant>
    <interactant intactId="EBI-711483">
        <id>P61604</id>
        <label>HSPE1</label>
    </interactant>
    <organismsDiffer>false</organismsDiffer>
    <experiments>3</experiments>
</comment>
<comment type="interaction">
    <interactant intactId="EBI-741158">
        <id>Q96HA8</id>
    </interactant>
    <interactant intactId="EBI-1056174">
        <id>O60921</id>
        <label>HUS1</label>
    </interactant>
    <organismsDiffer>false</organismsDiffer>
    <experiments>3</experiments>
</comment>
<comment type="interaction">
    <interactant intactId="EBI-741158">
        <id>Q96HA8</id>
    </interactant>
    <interactant intactId="EBI-17178971">
        <id>Q14005-2</id>
        <label>IL16</label>
    </interactant>
    <organismsDiffer>false</organismsDiffer>
    <experiments>3</experiments>
</comment>
<comment type="interaction">
    <interactant intactId="EBI-741158">
        <id>Q96HA8</id>
    </interactant>
    <interactant intactId="EBI-18286692">
        <id>Q6EBC2</id>
        <label>IL31</label>
    </interactant>
    <organismsDiffer>false</organismsDiffer>
    <experiments>3</experiments>
</comment>
<comment type="interaction">
    <interactant intactId="EBI-741158">
        <id>Q96HA8</id>
    </interactant>
    <interactant intactId="EBI-6509505">
        <id>Q0VD86</id>
        <label>INCA1</label>
    </interactant>
    <organismsDiffer>false</organismsDiffer>
    <experiments>5</experiments>
</comment>
<comment type="interaction">
    <interactant intactId="EBI-741158">
        <id>Q96HA8</id>
    </interactant>
    <interactant intactId="EBI-10258659">
        <id>Q86U28</id>
        <label>ISCA2</label>
    </interactant>
    <organismsDiffer>false</organismsDiffer>
    <experiments>3</experiments>
</comment>
<comment type="interaction">
    <interactant intactId="EBI-741158">
        <id>Q96HA8</id>
    </interactant>
    <interactant intactId="EBI-712105">
        <id>Q13352</id>
        <label>ITGB3BP</label>
    </interactant>
    <organismsDiffer>false</organismsDiffer>
    <experiments>3</experiments>
</comment>
<comment type="interaction">
    <interactant intactId="EBI-741158">
        <id>Q96HA8</id>
    </interactant>
    <interactant intactId="EBI-702484">
        <id>P14923</id>
        <label>JUP</label>
    </interactant>
    <organismsDiffer>false</organismsDiffer>
    <experiments>3</experiments>
</comment>
<comment type="interaction">
    <interactant intactId="EBI-741158">
        <id>Q96HA8</id>
    </interactant>
    <interactant intactId="EBI-715394">
        <id>Q9H079</id>
        <label>KATNBL1</label>
    </interactant>
    <organismsDiffer>false</organismsDiffer>
    <experiments>3</experiments>
</comment>
<comment type="interaction">
    <interactant intactId="EBI-741158">
        <id>Q96HA8</id>
    </interactant>
    <interactant intactId="EBI-2909270">
        <id>O95259</id>
        <label>KCNH1</label>
    </interactant>
    <organismsDiffer>false</organismsDiffer>
    <experiments>3</experiments>
</comment>
<comment type="interaction">
    <interactant intactId="EBI-741158">
        <id>Q96HA8</id>
    </interactant>
    <interactant intactId="EBI-9027502">
        <id>Q719H9</id>
        <label>KCTD1</label>
    </interactant>
    <organismsDiffer>false</organismsDiffer>
    <experiments>4</experiments>
</comment>
<comment type="interaction">
    <interactant intactId="EBI-741158">
        <id>Q96HA8</id>
    </interactant>
    <interactant intactId="EBI-2505886">
        <id>Q9H3F6</id>
        <label>KCTD10</label>
    </interactant>
    <organismsDiffer>false</organismsDiffer>
    <experiments>3</experiments>
</comment>
<comment type="interaction">
    <interactant intactId="EBI-741158">
        <id>Q96HA8</id>
    </interactant>
    <interactant intactId="EBI-742916">
        <id>Q8WZ19</id>
        <label>KCTD13</label>
    </interactant>
    <organismsDiffer>false</organismsDiffer>
    <experiments>3</experiments>
</comment>
<comment type="interaction">
    <interactant intactId="EBI-741158">
        <id>Q96HA8</id>
    </interactant>
    <interactant intactId="EBI-12382297">
        <id>Q96SI1-2</id>
        <label>KCTD15</label>
    </interactant>
    <organismsDiffer>false</organismsDiffer>
    <experiments>3</experiments>
</comment>
<comment type="interaction">
    <interactant intactId="EBI-741158">
        <id>Q96HA8</id>
    </interactant>
    <interactant intactId="EBI-11976683">
        <id>Q4G0X4</id>
        <label>KCTD21</label>
    </interactant>
    <organismsDiffer>false</organismsDiffer>
    <experiments>3</experiments>
</comment>
<comment type="interaction">
    <interactant intactId="EBI-741158">
        <id>Q96HA8</id>
    </interactant>
    <interactant intactId="EBI-741463">
        <id>Q8WVF5</id>
        <label>KCTD4</label>
    </interactant>
    <organismsDiffer>false</organismsDiffer>
    <experiments>3</experiments>
</comment>
<comment type="interaction">
    <interactant intactId="EBI-741158">
        <id>Q96HA8</id>
    </interactant>
    <interactant intactId="EBI-2511344">
        <id>Q8NC69</id>
        <label>KCTD6</label>
    </interactant>
    <organismsDiffer>false</organismsDiffer>
    <experiments>3</experiments>
</comment>
<comment type="interaction">
    <interactant intactId="EBI-741158">
        <id>Q96HA8</id>
    </interactant>
    <interactant intactId="EBI-11954971">
        <id>Q96MP8-2</id>
        <label>KCTD7</label>
    </interactant>
    <organismsDiffer>false</organismsDiffer>
    <experiments>3</experiments>
</comment>
<comment type="interaction">
    <interactant intactId="EBI-741158">
        <id>Q96HA8</id>
    </interactant>
    <interactant intactId="EBI-4397613">
        <id>Q7L273</id>
        <label>KCTD9</label>
    </interactant>
    <organismsDiffer>false</organismsDiffer>
    <experiments>3</experiments>
</comment>
<comment type="interaction">
    <interactant intactId="EBI-741158">
        <id>Q96HA8</id>
    </interactant>
    <interactant intactId="EBI-751001">
        <id>Q14145</id>
        <label>KEAP1</label>
    </interactant>
    <organismsDiffer>false</organismsDiffer>
    <experiments>3</experiments>
</comment>
<comment type="interaction">
    <interactant intactId="EBI-741158">
        <id>Q96HA8</id>
    </interactant>
    <interactant intactId="EBI-12897871">
        <id>O75037-4</id>
        <label>KIF21B</label>
    </interactant>
    <organismsDiffer>false</organismsDiffer>
    <experiments>3</experiments>
</comment>
<comment type="interaction">
    <interactant intactId="EBI-741158">
        <id>Q96HA8</id>
    </interactant>
    <interactant intactId="EBI-740929">
        <id>Q53G59</id>
        <label>KLHL12</label>
    </interactant>
    <organismsDiffer>false</organismsDiffer>
    <experiments>8</experiments>
</comment>
<comment type="interaction">
    <interactant intactId="EBI-741158">
        <id>Q96HA8</id>
    </interactant>
    <interactant intactId="EBI-746999">
        <id>O95198</id>
        <label>KLHL2</label>
    </interactant>
    <organismsDiffer>false</organismsDiffer>
    <experiments>3</experiments>
</comment>
<comment type="interaction">
    <interactant intactId="EBI-741158">
        <id>Q96HA8</id>
    </interactant>
    <interactant intactId="EBI-10693436">
        <id>Q9BS75</id>
        <label>KLHL20</label>
    </interactant>
    <organismsDiffer>false</organismsDiffer>
    <experiments>5</experiments>
</comment>
<comment type="interaction">
    <interactant intactId="EBI-741158">
        <id>Q96HA8</id>
    </interactant>
    <interactant intactId="EBI-3044087">
        <id>Q7Z3Y8</id>
        <label>KRT27</label>
    </interactant>
    <organismsDiffer>false</organismsDiffer>
    <experiments>3</experiments>
</comment>
<comment type="interaction">
    <interactant intactId="EBI-741158">
        <id>Q96HA8</id>
    </interactant>
    <interactant intactId="EBI-948001">
        <id>Q15323</id>
        <label>KRT31</label>
    </interactant>
    <organismsDiffer>false</organismsDiffer>
    <experiments>3</experiments>
</comment>
<comment type="interaction">
    <interactant intactId="EBI-741158">
        <id>Q96HA8</id>
    </interactant>
    <interactant intactId="EBI-10172150">
        <id>P60370</id>
        <label>KRTAP10-5</label>
    </interactant>
    <organismsDiffer>false</organismsDiffer>
    <experiments>3</experiments>
</comment>
<comment type="interaction">
    <interactant intactId="EBI-741158">
        <id>Q96HA8</id>
    </interactant>
    <interactant intactId="EBI-10172290">
        <id>P60409</id>
        <label>KRTAP10-7</label>
    </interactant>
    <organismsDiffer>false</organismsDiffer>
    <experiments>3</experiments>
</comment>
<comment type="interaction">
    <interactant intactId="EBI-741158">
        <id>Q96HA8</id>
    </interactant>
    <interactant intactId="EBI-12196745">
        <id>Q3LHN2</id>
        <label>KRTAP19-2</label>
    </interactant>
    <organismsDiffer>false</organismsDiffer>
    <experiments>5</experiments>
</comment>
<comment type="interaction">
    <interactant intactId="EBI-741158">
        <id>Q96HA8</id>
    </interactant>
    <interactant intactId="EBI-12805508">
        <id>Q3LI70</id>
        <label>KRTAP19-6</label>
    </interactant>
    <organismsDiffer>false</organismsDiffer>
    <experiments>3</experiments>
</comment>
<comment type="interaction">
    <interactant intactId="EBI-741158">
        <id>Q96HA8</id>
    </interactant>
    <interactant intactId="EBI-9996449">
        <id>Q9BYR8</id>
        <label>KRTAP3-1</label>
    </interactant>
    <organismsDiffer>false</organismsDiffer>
    <experiments>3</experiments>
</comment>
<comment type="interaction">
    <interactant intactId="EBI-741158">
        <id>Q96HA8</id>
    </interactant>
    <interactant intactId="EBI-3957694">
        <id>Q9BYR6</id>
        <label>KRTAP3-3</label>
    </interactant>
    <organismsDiffer>false</organismsDiffer>
    <experiments>3</experiments>
</comment>
<comment type="interaction">
    <interactant intactId="EBI-741158">
        <id>Q96HA8</id>
    </interactant>
    <interactant intactId="EBI-10172511">
        <id>Q9BYR5</id>
        <label>KRTAP4-2</label>
    </interactant>
    <organismsDiffer>false</organismsDiffer>
    <experiments>3</experiments>
</comment>
<comment type="interaction">
    <interactant intactId="EBI-741158">
        <id>Q96HA8</id>
    </interactant>
    <interactant intactId="EBI-3958099">
        <id>P26371</id>
        <label>KRTAP5-9</label>
    </interactant>
    <organismsDiffer>false</organismsDiffer>
    <experiments>6</experiments>
</comment>
<comment type="interaction">
    <interactant intactId="EBI-741158">
        <id>Q96HA8</id>
    </interactant>
    <interactant intactId="EBI-12111050">
        <id>Q3LI64</id>
        <label>KRTAP6-1</label>
    </interactant>
    <organismsDiffer>false</organismsDiffer>
    <experiments>3</experiments>
</comment>
<comment type="interaction">
    <interactant intactId="EBI-741158">
        <id>Q96HA8</id>
    </interactant>
    <interactant intactId="EBI-1044640">
        <id>Q9BYQ4</id>
        <label>KRTAP9-2</label>
    </interactant>
    <organismsDiffer>false</organismsDiffer>
    <experiments>6</experiments>
</comment>
<comment type="interaction">
    <interactant intactId="EBI-741158">
        <id>Q96HA8</id>
    </interactant>
    <interactant intactId="EBI-10185730">
        <id>Q9BYQ2</id>
        <label>KRTAP9-4</label>
    </interactant>
    <organismsDiffer>false</organismsDiffer>
    <experiments>3</experiments>
</comment>
<comment type="interaction">
    <interactant intactId="EBI-741158">
        <id>Q96HA8</id>
    </interactant>
    <interactant intactId="EBI-11958364">
        <id>Q9BYQ0</id>
        <label>KRTAP9-8</label>
    </interactant>
    <organismsDiffer>false</organismsDiffer>
    <experiments>3</experiments>
</comment>
<comment type="interaction">
    <interactant intactId="EBI-741158">
        <id>Q96HA8</id>
    </interactant>
    <interactant intactId="EBI-11985629">
        <id>Q96JM7-2</id>
        <label>L3MBTL3</label>
    </interactant>
    <organismsDiffer>false</organismsDiffer>
    <experiments>3</experiments>
</comment>
<comment type="interaction">
    <interactant intactId="EBI-741158">
        <id>Q96HA8</id>
    </interactant>
    <interactant intactId="EBI-12224199">
        <id>Q5T751</id>
        <label>LCE1C</label>
    </interactant>
    <organismsDiffer>false</organismsDiffer>
    <experiments>3</experiments>
</comment>
<comment type="interaction">
    <interactant intactId="EBI-741158">
        <id>Q96HA8</id>
    </interactant>
    <interactant intactId="EBI-11741311">
        <id>Q5T752</id>
        <label>LCE1D</label>
    </interactant>
    <organismsDiffer>false</organismsDiffer>
    <experiments>3</experiments>
</comment>
<comment type="interaction">
    <interactant intactId="EBI-741158">
        <id>Q96HA8</id>
    </interactant>
    <interactant intactId="EBI-11955335">
        <id>Q5T753</id>
        <label>LCE1E</label>
    </interactant>
    <organismsDiffer>false</organismsDiffer>
    <experiments>3</experiments>
</comment>
<comment type="interaction">
    <interactant intactId="EBI-741158">
        <id>Q96HA8</id>
    </interactant>
    <interactant intactId="EBI-11958008">
        <id>Q5T754</id>
        <label>LCE1F</label>
    </interactant>
    <organismsDiffer>false</organismsDiffer>
    <experiments>3</experiments>
</comment>
<comment type="interaction">
    <interactant intactId="EBI-741158">
        <id>Q96HA8</id>
    </interactant>
    <interactant intactId="EBI-11973993">
        <id>Q5TA81</id>
        <label>LCE2C</label>
    </interactant>
    <organismsDiffer>false</organismsDiffer>
    <experiments>3</experiments>
</comment>
<comment type="interaction">
    <interactant intactId="EBI-741158">
        <id>Q96HA8</id>
    </interactant>
    <interactant intactId="EBI-11955689">
        <id>Q5TCM9</id>
        <label>LCE5A</label>
    </interactant>
    <organismsDiffer>false</organismsDiffer>
    <experiments>3</experiments>
</comment>
<comment type="interaction">
    <interactant intactId="EBI-741158">
        <id>Q96HA8</id>
    </interactant>
    <interactant intactId="EBI-2865580">
        <id>O43679</id>
        <label>LDB2</label>
    </interactant>
    <organismsDiffer>false</organismsDiffer>
    <experiments>3</experiments>
</comment>
<comment type="interaction">
    <interactant intactId="EBI-741158">
        <id>Q96HA8</id>
    </interactant>
    <interactant intactId="EBI-726510">
        <id>Q96BZ8</id>
        <label>LENG1</label>
    </interactant>
    <organismsDiffer>false</organismsDiffer>
    <experiments>3</experiments>
</comment>
<comment type="interaction">
    <interactant intactId="EBI-741158">
        <id>Q96HA8</id>
    </interactant>
    <interactant intactId="EBI-7181544">
        <id>P05162</id>
        <label>LGALS2</label>
    </interactant>
    <organismsDiffer>false</organismsDiffer>
    <experiments>3</experiments>
</comment>
<comment type="interaction">
    <interactant intactId="EBI-741158">
        <id>Q96HA8</id>
    </interactant>
    <interactant intactId="EBI-10240775">
        <id>Q3B8N2</id>
        <label>LGALS9B</label>
    </interactant>
    <organismsDiffer>false</organismsDiffer>
    <experiments>3</experiments>
</comment>
<comment type="interaction">
    <interactant intactId="EBI-741158">
        <id>Q96HA8</id>
    </interactant>
    <interactant intactId="EBI-821335">
        <id>Q9HAP6</id>
        <label>LIN7B</label>
    </interactant>
    <organismsDiffer>false</organismsDiffer>
    <experiments>3</experiments>
</comment>
<comment type="interaction">
    <interactant intactId="EBI-741158">
        <id>Q96HA8</id>
    </interactant>
    <interactant intactId="EBI-8639312">
        <id>P25800</id>
        <label>LMO1</label>
    </interactant>
    <organismsDiffer>false</organismsDiffer>
    <experiments>3</experiments>
</comment>
<comment type="interaction">
    <interactant intactId="EBI-741158">
        <id>Q96HA8</id>
    </interactant>
    <interactant intactId="EBI-11959475">
        <id>P25791-3</id>
        <label>LMO2</label>
    </interactant>
    <organismsDiffer>false</organismsDiffer>
    <experiments>3</experiments>
</comment>
<comment type="interaction">
    <interactant intactId="EBI-741158">
        <id>Q96HA8</id>
    </interactant>
    <interactant intactId="EBI-11742507">
        <id>Q8TAP4-4</id>
        <label>LMO3</label>
    </interactant>
    <organismsDiffer>false</organismsDiffer>
    <experiments>3</experiments>
</comment>
<comment type="interaction">
    <interactant intactId="EBI-741158">
        <id>Q96HA8</id>
    </interactant>
    <interactant intactId="EBI-2341787">
        <id>Q17RB8</id>
        <label>LONRF1</label>
    </interactant>
    <organismsDiffer>false</organismsDiffer>
    <experiments>4</experiments>
</comment>
<comment type="interaction">
    <interactant intactId="EBI-741158">
        <id>Q96HA8</id>
    </interactant>
    <interactant intactId="EBI-473196">
        <id>Q5T3J3</id>
        <label>LRIF1</label>
    </interactant>
    <organismsDiffer>false</organismsDiffer>
    <experiments>3</experiments>
</comment>
<comment type="interaction">
    <interactant intactId="EBI-741158">
        <id>Q96HA8</id>
    </interactant>
    <interactant intactId="EBI-12003882">
        <id>Q5JTD7</id>
        <label>LRRC73</label>
    </interactant>
    <organismsDiffer>false</organismsDiffer>
    <experiments>3</experiments>
</comment>
<comment type="interaction">
    <interactant intactId="EBI-741158">
        <id>Q96HA8</id>
    </interactant>
    <interactant intactId="EBI-725133">
        <id>Q3MHD2</id>
        <label>LSM12</label>
    </interactant>
    <organismsDiffer>false</organismsDiffer>
    <experiments>3</experiments>
</comment>
<comment type="interaction">
    <interactant intactId="EBI-741158">
        <id>Q96HA8</id>
    </interactant>
    <interactant intactId="EBI-19133880">
        <id>Q9BX40-2</id>
        <label>LSM14B</label>
    </interactant>
    <organismsDiffer>false</organismsDiffer>
    <experiments>3</experiments>
</comment>
<comment type="interaction">
    <interactant intactId="EBI-741158">
        <id>Q96HA8</id>
    </interactant>
    <interactant intactId="EBI-2824799">
        <id>Q9NQ48</id>
        <label>LZTFL1</label>
    </interactant>
    <organismsDiffer>false</organismsDiffer>
    <experiments>4</experiments>
</comment>
<comment type="interaction">
    <interactant intactId="EBI-741158">
        <id>Q96HA8</id>
    </interactant>
    <interactant intactId="EBI-1216080">
        <id>Q9Y250</id>
        <label>LZTS1</label>
    </interactant>
    <organismsDiffer>false</organismsDiffer>
    <experiments>3</experiments>
</comment>
<comment type="interaction">
    <interactant intactId="EBI-741158">
        <id>Q96HA8</id>
    </interactant>
    <interactant intactId="EBI-741037">
        <id>Q9BRK4</id>
        <label>LZTS2</label>
    </interactant>
    <organismsDiffer>false</organismsDiffer>
    <experiments>3</experiments>
</comment>
<comment type="interaction">
    <interactant intactId="EBI-741158">
        <id>Q96HA8</id>
    </interactant>
    <interactant intactId="EBI-10268010">
        <id>Q8N8X9</id>
        <label>MAB21L3</label>
    </interactant>
    <organismsDiffer>false</organismsDiffer>
    <experiments>3</experiments>
</comment>
<comment type="interaction">
    <interactant intactId="EBI-741158">
        <id>Q96HA8</id>
    </interactant>
    <interactant intactId="EBI-742610">
        <id>Q9Y6D9</id>
        <label>MAD1L1</label>
    </interactant>
    <organismsDiffer>false</organismsDiffer>
    <experiments>3</experiments>
</comment>
<comment type="interaction">
    <interactant intactId="EBI-741158">
        <id>Q96HA8</id>
    </interactant>
    <interactant intactId="EBI-739552">
        <id>P43364</id>
        <label>MAGEA11</label>
    </interactant>
    <organismsDiffer>false</organismsDiffer>
    <experiments>3</experiments>
</comment>
<comment type="interaction">
    <interactant intactId="EBI-741158">
        <id>Q96HA8</id>
    </interactant>
    <interactant intactId="EBI-10178634">
        <id>P43364-2</id>
        <label>MAGEA11</label>
    </interactant>
    <organismsDiffer>false</organismsDiffer>
    <experiments>3</experiments>
</comment>
<comment type="interaction">
    <interactant intactId="EBI-741158">
        <id>Q96HA8</id>
    </interactant>
    <interactant intactId="EBI-749530">
        <id>P43365</id>
        <label>MAGEA12</label>
    </interactant>
    <organismsDiffer>false</organismsDiffer>
    <experiments>3</experiments>
</comment>
<comment type="interaction">
    <interactant intactId="EBI-741158">
        <id>Q96HA8</id>
    </interactant>
    <interactant intactId="EBI-5650739">
        <id>P43356</id>
        <label>MAGEA2B</label>
    </interactant>
    <organismsDiffer>false</organismsDiffer>
    <experiments>5</experiments>
</comment>
<comment type="interaction">
    <interactant intactId="EBI-741158">
        <id>Q96HA8</id>
    </interactant>
    <interactant intactId="EBI-2339737">
        <id>Q96EH3</id>
        <label>MALSU1</label>
    </interactant>
    <organismsDiffer>false</organismsDiffer>
    <experiments>3</experiments>
</comment>
<comment type="interaction">
    <interactant intactId="EBI-741158">
        <id>Q96HA8</id>
    </interactant>
    <interactant intactId="EBI-2341554">
        <id>Q8NA82</id>
        <label>MARCHF10</label>
    </interactant>
    <organismsDiffer>false</organismsDiffer>
    <experiments>3</experiments>
</comment>
<comment type="interaction">
    <interactant intactId="EBI-741158">
        <id>Q96HA8</id>
    </interactant>
    <interactant intactId="EBI-12072296">
        <id>O95460-2</id>
        <label>MATN4</label>
    </interactant>
    <organismsDiffer>false</organismsDiffer>
    <experiments>3</experiments>
</comment>
<comment type="interaction">
    <interactant intactId="EBI-741158">
        <id>Q96HA8</id>
    </interactant>
    <interactant intactId="EBI-12954271">
        <id>Q15528-2</id>
        <label>MED22</label>
    </interactant>
    <organismsDiffer>false</organismsDiffer>
    <experiments>3</experiments>
</comment>
<comment type="interaction">
    <interactant intactId="EBI-741158">
        <id>Q96HA8</id>
    </interactant>
    <interactant intactId="EBI-372712">
        <id>P14174</id>
        <label>MIF</label>
    </interactant>
    <organismsDiffer>false</organismsDiffer>
    <experiments>4</experiments>
</comment>
<comment type="interaction">
    <interactant intactId="EBI-741158">
        <id>Q96HA8</id>
    </interactant>
    <interactant intactId="EBI-9118295">
        <id>A9UHW6-2</id>
        <label>MIF4GD</label>
    </interactant>
    <organismsDiffer>false</organismsDiffer>
    <experiments>3</experiments>
</comment>
<comment type="interaction">
    <interactant intactId="EBI-741158">
        <id>Q96HA8</id>
    </interactant>
    <interactant intactId="EBI-2548751">
        <id>Q8TD10</id>
        <label>MIPOL1</label>
    </interactant>
    <organismsDiffer>false</organismsDiffer>
    <experiments>3</experiments>
</comment>
<comment type="interaction">
    <interactant intactId="EBI-741158">
        <id>Q96HA8</id>
    </interactant>
    <interactant intactId="EBI-1104552">
        <id>Q9NYP9</id>
        <label>MIS18A</label>
    </interactant>
    <organismsDiffer>false</organismsDiffer>
    <experiments>3</experiments>
</comment>
<comment type="interaction">
    <interactant intactId="EBI-741158">
        <id>Q96HA8</id>
    </interactant>
    <interactant intactId="EBI-2691489">
        <id>Q8WV92</id>
        <label>MITD1</label>
    </interactant>
    <organismsDiffer>false</organismsDiffer>
    <experiments>3</experiments>
</comment>
<comment type="interaction">
    <interactant intactId="EBI-741158">
        <id>Q96HA8</id>
    </interactant>
    <interactant intactId="EBI-2558739">
        <id>Q70IA6</id>
        <label>MOB2</label>
    </interactant>
    <organismsDiffer>false</organismsDiffer>
    <experiments>3</experiments>
</comment>
<comment type="interaction">
    <interactant intactId="EBI-741158">
        <id>Q96HA8</id>
    </interactant>
    <interactant intactId="EBI-9675802">
        <id>Q6PF18</id>
        <label>MORN3</label>
    </interactant>
    <organismsDiffer>false</organismsDiffer>
    <experiments>3</experiments>
</comment>
<comment type="interaction">
    <interactant intactId="EBI-741158">
        <id>Q96HA8</id>
    </interactant>
    <interactant intactId="EBI-11603426">
        <id>Q8TAP9</id>
        <label>MPLKIP</label>
    </interactant>
    <organismsDiffer>false</organismsDiffer>
    <experiments>3</experiments>
</comment>
<comment type="interaction">
    <interactant intactId="EBI-741158">
        <id>Q96HA8</id>
    </interactant>
    <interactant intactId="EBI-748896">
        <id>Q96HT8</id>
        <label>MRFAP1L1</label>
    </interactant>
    <organismsDiffer>false</organismsDiffer>
    <experiments>3</experiments>
</comment>
<comment type="interaction">
    <interactant intactId="EBI-741158">
        <id>Q96HA8</id>
    </interactant>
    <interactant intactId="EBI-358272">
        <id>P52815</id>
        <label>MRPL12</label>
    </interactant>
    <organismsDiffer>false</organismsDiffer>
    <experiments>3</experiments>
</comment>
<comment type="interaction">
    <interactant intactId="EBI-741158">
        <id>Q96HA8</id>
    </interactant>
    <interactant intactId="EBI-14202147">
        <id>Q9H903-3</id>
        <label>MTHFD2L</label>
    </interactant>
    <organismsDiffer>false</organismsDiffer>
    <experiments>3</experiments>
</comment>
<comment type="interaction">
    <interactant intactId="EBI-741158">
        <id>Q96HA8</id>
    </interactant>
    <interactant intactId="EBI-742948">
        <id>Q5JR59</id>
        <label>MTUS2</label>
    </interactant>
    <organismsDiffer>false</organismsDiffer>
    <experiments>3</experiments>
</comment>
<comment type="interaction">
    <interactant intactId="EBI-741158">
        <id>Q96HA8</id>
    </interactant>
    <interactant intactId="EBI-11522433">
        <id>Q5JR59-3</id>
        <label>MTUS2</label>
    </interactant>
    <organismsDiffer>false</organismsDiffer>
    <experiments>5</experiments>
</comment>
<comment type="interaction">
    <interactant intactId="EBI-741158">
        <id>Q96HA8</id>
    </interactant>
    <interactant intactId="EBI-2816254">
        <id>Q14764</id>
        <label>MVP</label>
    </interactant>
    <organismsDiffer>false</organismsDiffer>
    <experiments>3</experiments>
</comment>
<comment type="interaction">
    <interactant intactId="EBI-741158">
        <id>Q96HA8</id>
    </interactant>
    <interactant intactId="EBI-11721798">
        <id>Q9BRK3</id>
        <label>MXRA8</label>
    </interactant>
    <organismsDiffer>false</organismsDiffer>
    <experiments>3</experiments>
</comment>
<comment type="interaction">
    <interactant intactId="EBI-741158">
        <id>Q96HA8</id>
    </interactant>
    <interactant intactId="EBI-447677">
        <id>Q99836</id>
        <label>MYD88</label>
    </interactant>
    <organismsDiffer>false</organismsDiffer>
    <experiments>3</experiments>
</comment>
<comment type="interaction">
    <interactant intactId="EBI-741158">
        <id>Q96HA8</id>
    </interactant>
    <interactant intactId="EBI-2512055">
        <id>O15049</id>
        <label>N4BP3</label>
    </interactant>
    <organismsDiffer>false</organismsDiffer>
    <experiments>3</experiments>
</comment>
<comment type="interaction">
    <interactant intactId="EBI-741158">
        <id>Q96HA8</id>
    </interactant>
    <interactant intactId="EBI-8641936">
        <id>Q15742</id>
        <label>NAB2</label>
    </interactant>
    <organismsDiffer>false</organismsDiffer>
    <experiments>3</experiments>
</comment>
<comment type="interaction">
    <interactant intactId="EBI-741158">
        <id>Q96HA8</id>
    </interactant>
    <interactant intactId="EBI-748610">
        <id>Q6IA69</id>
        <label>NADSYN1</label>
    </interactant>
    <organismsDiffer>false</organismsDiffer>
    <experiments>3</experiments>
</comment>
<comment type="interaction">
    <interactant intactId="EBI-741158">
        <id>Q96HA8</id>
    </interactant>
    <interactant intactId="EBI-11526455">
        <id>Q9UJ70-2</id>
        <label>NAGK</label>
    </interactant>
    <organismsDiffer>false</organismsDiffer>
    <experiments>5</experiments>
</comment>
<comment type="interaction">
    <interactant intactId="EBI-741158">
        <id>Q96HA8</id>
    </interactant>
    <interactant intactId="EBI-1246261">
        <id>O14561</id>
        <label>NDUFAB1</label>
    </interactant>
    <organismsDiffer>false</organismsDiffer>
    <experiments>3</experiments>
</comment>
<comment type="interaction">
    <interactant intactId="EBI-741158">
        <id>Q96HA8</id>
    </interactant>
    <interactant intactId="EBI-10172876">
        <id>Q7Z6G3-2</id>
        <label>NECAB2</label>
    </interactant>
    <organismsDiffer>false</organismsDiffer>
    <experiments>8</experiments>
</comment>
<comment type="interaction">
    <interactant intactId="EBI-741158">
        <id>Q96HA8</id>
    </interactant>
    <interactant intactId="EBI-741141">
        <id>P15531</id>
        <label>NME1</label>
    </interactant>
    <organismsDiffer>false</organismsDiffer>
    <experiments>8</experiments>
</comment>
<comment type="interaction">
    <interactant intactId="EBI-741158">
        <id>Q96HA8</id>
    </interactant>
    <interactant intactId="EBI-10287915">
        <id>Q9BXD5</id>
        <label>NPL</label>
    </interactant>
    <organismsDiffer>false</organismsDiffer>
    <experiments>3</experiments>
</comment>
<comment type="interaction">
    <interactant intactId="EBI-741158">
        <id>Q96HA8</id>
    </interactant>
    <interactant intactId="EBI-874629">
        <id>Q13285</id>
        <label>NR5A1</label>
    </interactant>
    <organismsDiffer>false</organismsDiffer>
    <experiments>3</experiments>
</comment>
<comment type="interaction">
    <interactant intactId="EBI-741158">
        <id>Q96HA8</id>
    </interactant>
    <interactant intactId="EBI-10441581">
        <id>Q9BXI3</id>
        <label>NT5C1A</label>
    </interactant>
    <organismsDiffer>false</organismsDiffer>
    <experiments>6</experiments>
</comment>
<comment type="interaction">
    <interactant intactId="EBI-741158">
        <id>Q96HA8</id>
    </interactant>
    <interactant intactId="EBI-536866">
        <id>O95848</id>
        <label>NUDT14</label>
    </interactant>
    <organismsDiffer>false</organismsDiffer>
    <experiments>4</experiments>
</comment>
<comment type="interaction">
    <interactant intactId="EBI-741158">
        <id>Q96HA8</id>
    </interactant>
    <interactant intactId="EBI-2949792">
        <id>Q9BRJ7</id>
        <label>NUDT16L1</label>
    </interactant>
    <organismsDiffer>false</organismsDiffer>
    <experiments>3</experiments>
</comment>
<comment type="interaction">
    <interactant intactId="EBI-741158">
        <id>Q96HA8</id>
    </interactant>
    <interactant intactId="EBI-355720">
        <id>O43809</id>
        <label>NUDT21</label>
    </interactant>
    <organismsDiffer>false</organismsDiffer>
    <experiments>5</experiments>
</comment>
<comment type="interaction">
    <interactant intactId="EBI-741158">
        <id>Q96HA8</id>
    </interactant>
    <interactant intactId="EBI-18583589">
        <id>A6NGQ2</id>
        <label>OOEP</label>
    </interactant>
    <organismsDiffer>false</organismsDiffer>
    <experiments>3</experiments>
</comment>
<comment type="interaction">
    <interactant intactId="EBI-741158">
        <id>Q96HA8</id>
    </interactant>
    <interactant intactId="EBI-741896">
        <id>Q9P286</id>
        <label>PAK5</label>
    </interactant>
    <organismsDiffer>false</organismsDiffer>
    <experiments>3</experiments>
</comment>
<comment type="interaction">
    <interactant intactId="EBI-741158">
        <id>Q96HA8</id>
    </interactant>
    <interactant intactId="EBI-740475">
        <id>P61457</id>
        <label>PCBD1</label>
    </interactant>
    <organismsDiffer>false</organismsDiffer>
    <experiments>4</experiments>
</comment>
<comment type="interaction">
    <interactant intactId="EBI-741158">
        <id>Q96HA8</id>
    </interactant>
    <interactant intactId="EBI-357275">
        <id>Q99471</id>
        <label>PFDN5</label>
    </interactant>
    <organismsDiffer>false</organismsDiffer>
    <experiments>3</experiments>
</comment>
<comment type="interaction">
    <interactant intactId="EBI-741158">
        <id>Q96HA8</id>
    </interactant>
    <interactant intactId="EBI-12813581">
        <id>Q9NXJ5-2</id>
        <label>PGPEP1</label>
    </interactant>
    <organismsDiffer>false</organismsDiffer>
    <experiments>3</experiments>
</comment>
<comment type="interaction">
    <interactant intactId="EBI-741158">
        <id>Q96HA8</id>
    </interactant>
    <interactant intactId="EBI-10232538">
        <id>Q8WWB5</id>
        <label>PIH1D2</label>
    </interactant>
    <organismsDiffer>false</organismsDiffer>
    <experiments>3</experiments>
</comment>
<comment type="interaction">
    <interactant intactId="EBI-741158">
        <id>Q96HA8</id>
    </interactant>
    <interactant intactId="EBI-726466">
        <id>O15496</id>
        <label>PLA2G10</label>
    </interactant>
    <organismsDiffer>false</organismsDiffer>
    <experiments>5</experiments>
</comment>
<comment type="interaction">
    <interactant intactId="EBI-741158">
        <id>Q96HA8</id>
    </interactant>
    <interactant intactId="EBI-4405387">
        <id>P51178</id>
        <label>PLCD1</label>
    </interactant>
    <organismsDiffer>false</organismsDiffer>
    <experiments>3</experiments>
</comment>
<comment type="interaction">
    <interactant intactId="EBI-741158">
        <id>Q96HA8</id>
    </interactant>
    <interactant intactId="EBI-373552">
        <id>Q96CS7</id>
        <label>PLEKHB2</label>
    </interactant>
    <organismsDiffer>false</organismsDiffer>
    <experiments>5</experiments>
</comment>
<comment type="interaction">
    <interactant intactId="EBI-741158">
        <id>Q96HA8</id>
    </interactant>
    <interactant intactId="EBI-1057560">
        <id>Q9NW61</id>
        <label>PLEKHJ1</label>
    </interactant>
    <organismsDiffer>false</organismsDiffer>
    <experiments>3</experiments>
</comment>
<comment type="interaction">
    <interactant intactId="EBI-741158">
        <id>Q96HA8</id>
    </interactant>
    <interactant intactId="EBI-302345">
        <id>Q8ND90</id>
        <label>PNMA1</label>
    </interactant>
    <organismsDiffer>false</organismsDiffer>
    <experiments>6</experiments>
</comment>
<comment type="interaction">
    <interactant intactId="EBI-741158">
        <id>Q96HA8</id>
    </interactant>
    <interactant intactId="EBI-302355">
        <id>Q9UL42</id>
        <label>PNMA2</label>
    </interactant>
    <organismsDiffer>false</organismsDiffer>
    <experiments>3</experiments>
</comment>
<comment type="interaction">
    <interactant intactId="EBI-741158">
        <id>Q96HA8</id>
    </interactant>
    <interactant intactId="EBI-10171633">
        <id>Q96PV4</id>
        <label>PNMA5</label>
    </interactant>
    <organismsDiffer>false</organismsDiffer>
    <experiments>7</experiments>
</comment>
<comment type="interaction">
    <interactant intactId="EBI-741158">
        <id>Q96HA8</id>
    </interactant>
    <interactant intactId="EBI-394753">
        <id>P52435</id>
        <label>POLR2J</label>
    </interactant>
    <organismsDiffer>false</organismsDiffer>
    <experiments>3</experiments>
</comment>
<comment type="interaction">
    <interactant intactId="EBI-741158">
        <id>Q96HA8</id>
    </interactant>
    <interactant intactId="EBI-12219503">
        <id>P01189</id>
        <label>POMC</label>
    </interactant>
    <organismsDiffer>false</organismsDiffer>
    <experiments>3</experiments>
</comment>
<comment type="interaction">
    <interactant intactId="EBI-741158">
        <id>Q96HA8</id>
    </interactant>
    <interactant intactId="EBI-724333">
        <id>Q96CD2</id>
        <label>PPCDC</label>
    </interactant>
    <organismsDiffer>false</organismsDiffer>
    <experiments>6</experiments>
</comment>
<comment type="interaction">
    <interactant intactId="EBI-741158">
        <id>Q96HA8</id>
    </interactant>
    <interactant intactId="EBI-3923368">
        <id>Q8N3J5</id>
        <label>PPM1K</label>
    </interactant>
    <organismsDiffer>false</organismsDiffer>
    <experiments>3</experiments>
</comment>
<comment type="interaction">
    <interactant intactId="EBI-741158">
        <id>Q96HA8</id>
    </interactant>
    <interactant intactId="EBI-5235602">
        <id>Q86WC6</id>
        <label>PPP1R27</label>
    </interactant>
    <organismsDiffer>false</organismsDiffer>
    <experiments>3</experiments>
</comment>
<comment type="interaction">
    <interactant intactId="EBI-741158">
        <id>Q96HA8</id>
    </interactant>
    <interactant intactId="EBI-2805516">
        <id>P31321</id>
        <label>PRKAR1B</label>
    </interactant>
    <organismsDiffer>false</organismsDiffer>
    <experiments>3</experiments>
</comment>
<comment type="interaction">
    <interactant intactId="EBI-741158">
        <id>Q96HA8</id>
    </interactant>
    <interactant intactId="EBI-78738">
        <id>Q99873</id>
        <label>PRMT1</label>
    </interactant>
    <organismsDiffer>false</organismsDiffer>
    <experiments>3</experiments>
</comment>
<comment type="interaction">
    <interactant intactId="EBI-741158">
        <id>Q96HA8</id>
    </interactant>
    <interactant intactId="EBI-351098">
        <id>O14744</id>
        <label>PRMT5</label>
    </interactant>
    <organismsDiffer>false</organismsDiffer>
    <experiments>3</experiments>
</comment>
<comment type="interaction">
    <interactant intactId="EBI-741158">
        <id>Q96HA8</id>
    </interactant>
    <interactant intactId="EBI-4290895">
        <id>P11908</id>
        <label>PRPS2</label>
    </interactant>
    <organismsDiffer>false</organismsDiffer>
    <experiments>4</experiments>
</comment>
<comment type="interaction">
    <interactant intactId="EBI-741158">
        <id>Q96HA8</id>
    </interactant>
    <interactant intactId="EBI-12754095">
        <id>P86480</id>
        <label>PRR20D</label>
    </interactant>
    <organismsDiffer>false</organismsDiffer>
    <experiments>3</experiments>
</comment>
<comment type="interaction">
    <interactant intactId="EBI-741158">
        <id>Q96HA8</id>
    </interactant>
    <interactant intactId="EBI-12845180">
        <id>Q6ZRT6</id>
        <label>PRR23B</label>
    </interactant>
    <organismsDiffer>false</organismsDiffer>
    <experiments>3</experiments>
</comment>
<comment type="interaction">
    <interactant intactId="EBI-741158">
        <id>Q96HA8</id>
    </interactant>
    <interactant intactId="EBI-739759">
        <id>Q9NRG1</id>
        <label>PRTFDC1</label>
    </interactant>
    <organismsDiffer>false</organismsDiffer>
    <experiments>3</experiments>
</comment>
<comment type="interaction">
    <interactant intactId="EBI-741158">
        <id>Q96HA8</id>
    </interactant>
    <interactant intactId="EBI-9978131">
        <id>Q1KLZ0</id>
        <label>PS1TP5BP1</label>
    </interactant>
    <organismsDiffer>false</organismsDiffer>
    <experiments>3</experiments>
</comment>
<comment type="interaction">
    <interactant intactId="EBI-741158">
        <id>Q96HA8</id>
    </interactant>
    <interactant intactId="EBI-357828">
        <id>P28074</id>
        <label>PSMB5</label>
    </interactant>
    <organismsDiffer>false</organismsDiffer>
    <experiments>3</experiments>
</comment>
<comment type="interaction">
    <interactant intactId="EBI-741158">
        <id>Q96HA8</id>
    </interactant>
    <interactant intactId="EBI-355546">
        <id>P61289</id>
        <label>PSME3</label>
    </interactant>
    <organismsDiffer>false</organismsDiffer>
    <experiments>5</experiments>
</comment>
<comment type="interaction">
    <interactant intactId="EBI-741158">
        <id>Q96HA8</id>
    </interactant>
    <interactant intactId="EBI-712344">
        <id>Q03393</id>
        <label>PTS</label>
    </interactant>
    <organismsDiffer>false</organismsDiffer>
    <experiments>3</experiments>
</comment>
<comment type="interaction">
    <interactant intactId="EBI-741158">
        <id>Q96HA8</id>
    </interactant>
    <interactant intactId="EBI-2959680">
        <id>Q53H96</id>
        <label>PYCR3</label>
    </interactant>
    <organismsDiffer>false</organismsDiffer>
    <experiments>3</experiments>
</comment>
<comment type="interaction">
    <interactant intactId="EBI-741158">
        <id>Q96HA8</id>
    </interactant>
    <interactant intactId="EBI-357469">
        <id>P11217</id>
        <label>PYGM</label>
    </interactant>
    <organismsDiffer>false</organismsDiffer>
    <experiments>4</experiments>
</comment>
<comment type="interaction">
    <interactant intactId="EBI-741158">
        <id>Q96HA8</id>
    </interactant>
    <interactant intactId="EBI-17857145">
        <id>Q8N4Z0-1</id>
        <label>RAB42</label>
    </interactant>
    <organismsDiffer>false</organismsDiffer>
    <experiments>3</experiments>
</comment>
<comment type="interaction">
    <interactant intactId="EBI-741158">
        <id>Q96HA8</id>
    </interactant>
    <interactant intactId="EBI-712367">
        <id>Q9UI14</id>
        <label>RABAC1</label>
    </interactant>
    <organismsDiffer>false</organismsDiffer>
    <experiments>9</experiments>
</comment>
<comment type="interaction">
    <interactant intactId="EBI-741158">
        <id>Q96HA8</id>
    </interactant>
    <interactant intactId="EBI-5333483">
        <id>Q92698</id>
        <label>RAD54L</label>
    </interactant>
    <organismsDiffer>false</organismsDiffer>
    <experiments>6</experiments>
</comment>
<comment type="interaction">
    <interactant intactId="EBI-741158">
        <id>Q96HA8</id>
    </interactant>
    <interactant intactId="EBI-3437896">
        <id>Q86YV0</id>
        <label>RASAL3</label>
    </interactant>
    <organismsDiffer>false</organismsDiffer>
    <experiments>3</experiments>
</comment>
<comment type="interaction">
    <interactant intactId="EBI-741158">
        <id>Q96HA8</id>
    </interactant>
    <interactant intactId="EBI-11352885">
        <id>Q5T481</id>
        <label>RBM20</label>
    </interactant>
    <organismsDiffer>false</organismsDiffer>
    <experiments>3</experiments>
</comment>
<comment type="interaction">
    <interactant intactId="EBI-741158">
        <id>Q96HA8</id>
    </interactant>
    <interactant intactId="EBI-10964453">
        <id>Q8IUH3-3</id>
        <label>RBM45</label>
    </interactant>
    <organismsDiffer>false</organismsDiffer>
    <experiments>3</experiments>
</comment>
<comment type="interaction">
    <interactant intactId="EBI-741158">
        <id>Q96HA8</id>
    </interactant>
    <interactant intactId="EBI-473821">
        <id>Q5RL73</id>
        <label>RBM48</label>
    </interactant>
    <organismsDiffer>false</organismsDiffer>
    <experiments>3</experiments>
</comment>
<comment type="interaction">
    <interactant intactId="EBI-741158">
        <id>Q96HA8</id>
    </interactant>
    <interactant intactId="EBI-740322">
        <id>Q93062</id>
        <label>RBPMS</label>
    </interactant>
    <organismsDiffer>false</organismsDiffer>
    <experiments>3</experiments>
</comment>
<comment type="interaction">
    <interactant intactId="EBI-741158">
        <id>Q96HA8</id>
    </interactant>
    <interactant intactId="EBI-10257497">
        <id>Q7Z3Z2</id>
        <label>RD3</label>
    </interactant>
    <organismsDiffer>false</organismsDiffer>
    <experiments>3</experiments>
</comment>
<comment type="interaction">
    <interactant intactId="EBI-741158">
        <id>Q96HA8</id>
    </interactant>
    <interactant intactId="EBI-14065960">
        <id>Q96HR9-2</id>
        <label>REEP6</label>
    </interactant>
    <organismsDiffer>false</organismsDiffer>
    <experiments>3</experiments>
</comment>
<comment type="interaction">
    <interactant intactId="EBI-741158">
        <id>Q96HA8</id>
    </interactant>
    <interactant intactId="EBI-689202">
        <id>P17081</id>
        <label>RHOQ</label>
    </interactant>
    <organismsDiffer>false</organismsDiffer>
    <experiments>3</experiments>
</comment>
<comment type="interaction">
    <interactant intactId="EBI-741158">
        <id>Q96HA8</id>
    </interactant>
    <interactant intactId="EBI-12072024">
        <id>Q5EBL4-3</id>
        <label>RILPL1</label>
    </interactant>
    <organismsDiffer>false</organismsDiffer>
    <experiments>3</experiments>
</comment>
<comment type="interaction">
    <interactant intactId="EBI-741158">
        <id>Q96HA8</id>
    </interactant>
    <interactant intactId="EBI-749039">
        <id>Q8WVD3</id>
        <label>RNF138</label>
    </interactant>
    <organismsDiffer>false</organismsDiffer>
    <experiments>3</experiments>
</comment>
<comment type="interaction">
    <interactant intactId="EBI-741158">
        <id>Q96HA8</id>
    </interactant>
    <interactant intactId="EBI-2340927">
        <id>P78317</id>
        <label>RNF4</label>
    </interactant>
    <organismsDiffer>false</organismsDiffer>
    <experiments>3</experiments>
</comment>
<comment type="interaction">
    <interactant intactId="EBI-741158">
        <id>Q96HA8</id>
    </interactant>
    <interactant intactId="EBI-1378139">
        <id>Q9HAT0</id>
        <label>ROPN1</label>
    </interactant>
    <organismsDiffer>false</organismsDiffer>
    <experiments>5</experiments>
</comment>
<comment type="interaction">
    <interactant intactId="EBI-741158">
        <id>Q96HA8</id>
    </interactant>
    <interactant intactId="EBI-744831">
        <id>P49247</id>
        <label>RPIA</label>
    </interactant>
    <organismsDiffer>false</organismsDiffer>
    <experiments>8</experiments>
</comment>
<comment type="interaction">
    <interactant intactId="EBI-741158">
        <id>Q96HA8</id>
    </interactant>
    <interactant intactId="EBI-6257312">
        <id>Q9BVN2</id>
        <label>RUSC1</label>
    </interactant>
    <organismsDiffer>false</organismsDiffer>
    <experiments>3</experiments>
</comment>
<comment type="interaction">
    <interactant intactId="EBI-741158">
        <id>Q96HA8</id>
    </interactant>
    <interactant intactId="EBI-701862">
        <id>P31949</id>
        <label>S100A11</label>
    </interactant>
    <organismsDiffer>false</organismsDiffer>
    <experiments>3</experiments>
</comment>
<comment type="interaction">
    <interactant intactId="EBI-741158">
        <id>Q96HA8</id>
    </interactant>
    <interactant intactId="EBI-1044156">
        <id>O00422</id>
        <label>SAP18</label>
    </interactant>
    <organismsDiffer>false</organismsDiffer>
    <experiments>3</experiments>
</comment>
<comment type="interaction">
    <interactant intactId="EBI-741158">
        <id>Q96HA8</id>
    </interactant>
    <interactant intactId="EBI-1049768">
        <id>Q9NP81</id>
        <label>SARS2</label>
    </interactant>
    <organismsDiffer>false</organismsDiffer>
    <experiments>3</experiments>
</comment>
<comment type="interaction">
    <interactant intactId="EBI-741158">
        <id>Q96HA8</id>
    </interactant>
    <interactant intactId="EBI-711613">
        <id>P21673</id>
        <label>SAT1</label>
    </interactant>
    <organismsDiffer>false</organismsDiffer>
    <experiments>3</experiments>
</comment>
<comment type="interaction">
    <interactant intactId="EBI-741158">
        <id>Q96HA8</id>
    </interactant>
    <interactant intactId="EBI-12823227">
        <id>Q6ZMJ2-2</id>
        <label>SCARA5</label>
    </interactant>
    <organismsDiffer>false</organismsDiffer>
    <experiments>3</experiments>
</comment>
<comment type="interaction">
    <interactant intactId="EBI-741158">
        <id>Q96HA8</id>
    </interactant>
    <interactant intactId="EBI-10216195">
        <id>P59797</id>
        <label>SELENOV</label>
    </interactant>
    <organismsDiffer>false</organismsDiffer>
    <experiments>3</experiments>
</comment>
<comment type="interaction">
    <interactant intactId="EBI-741158">
        <id>Q96HA8</id>
    </interactant>
    <interactant intactId="EBI-2009297">
        <id>Q6ZU15</id>
        <label>SEPTIN14</label>
    </interactant>
    <organismsDiffer>false</organismsDiffer>
    <experiments>3</experiments>
</comment>
<comment type="interaction">
    <interactant intactId="EBI-741158">
        <id>Q96HA8</id>
    </interactant>
    <interactant intactId="EBI-727037">
        <id>Q9UH03</id>
        <label>SEPTIN3</label>
    </interactant>
    <organismsDiffer>false</organismsDiffer>
    <experiments>3</experiments>
</comment>
<comment type="interaction">
    <interactant intactId="EBI-741158">
        <id>Q96HA8</id>
    </interactant>
    <interactant intactId="EBI-476295">
        <id>P31947</id>
        <label>SFN</label>
    </interactant>
    <organismsDiffer>false</organismsDiffer>
    <experiments>4</experiments>
</comment>
<comment type="interaction">
    <interactant intactId="EBI-741158">
        <id>Q96HA8</id>
    </interactant>
    <interactant intactId="EBI-749607">
        <id>Q9NR46</id>
        <label>SH3GLB2</label>
    </interactant>
    <organismsDiffer>false</organismsDiffer>
    <experiments>3</experiments>
</comment>
<comment type="interaction">
    <interactant intactId="EBI-741158">
        <id>Q96HA8</id>
    </interactant>
    <interactant intactId="EBI-747107">
        <id>Q8IUQ4</id>
        <label>SIAH1</label>
    </interactant>
    <organismsDiffer>false</organismsDiffer>
    <experiments>3</experiments>
</comment>
<comment type="interaction">
    <interactant intactId="EBI-741158">
        <id>Q96HA8</id>
    </interactant>
    <interactant intactId="EBI-1773646">
        <id>Q9BRV8</id>
        <label>SIKE1</label>
    </interactant>
    <organismsDiffer>false</organismsDiffer>
    <experiments>3</experiments>
</comment>
<comment type="interaction">
    <interactant intactId="EBI-741158">
        <id>Q96HA8</id>
    </interactant>
    <interactant intactId="EBI-12372219">
        <id>O15304-2</id>
        <label>SIVA1</label>
    </interactant>
    <organismsDiffer>false</organismsDiffer>
    <experiments>3</experiments>
</comment>
<comment type="interaction">
    <interactant intactId="EBI-741158">
        <id>Q96HA8</id>
    </interactant>
    <interactant intactId="EBI-10269374">
        <id>Q8ND83</id>
        <label>SLAIN1</label>
    </interactant>
    <organismsDiffer>false</organismsDiffer>
    <experiments>3</experiments>
</comment>
<comment type="interaction">
    <interactant intactId="EBI-741158">
        <id>Q96HA8</id>
    </interactant>
    <interactant intactId="EBI-12806032">
        <id>Q16348</id>
        <label>SLC15A2</label>
    </interactant>
    <organismsDiffer>false</organismsDiffer>
    <experiments>3</experiments>
</comment>
<comment type="interaction">
    <interactant intactId="EBI-741158">
        <id>Q96HA8</id>
    </interactant>
    <interactant intactId="EBI-355293">
        <id>P03973</id>
        <label>SLPI</label>
    </interactant>
    <organismsDiffer>false</organismsDiffer>
    <experiments>3</experiments>
</comment>
<comment type="interaction">
    <interactant intactId="EBI-741158">
        <id>Q96HA8</id>
    </interactant>
    <interactant intactId="EBI-12061577">
        <id>Q8IYB5-2</id>
        <label>SMAP1</label>
    </interactant>
    <organismsDiffer>false</organismsDiffer>
    <experiments>3</experiments>
</comment>
<comment type="interaction">
    <interactant intactId="EBI-741158">
        <id>Q96HA8</id>
    </interactant>
    <interactant intactId="EBI-490676">
        <id>O95721</id>
        <label>SNAP29</label>
    </interactant>
    <organismsDiffer>false</organismsDiffer>
    <experiments>3</experiments>
</comment>
<comment type="interaction">
    <interactant intactId="EBI-741158">
        <id>Q96HA8</id>
    </interactant>
    <interactant intactId="EBI-372789">
        <id>P62318</id>
        <label>SNRPD3</label>
    </interactant>
    <organismsDiffer>false</organismsDiffer>
    <experiments>3</experiments>
</comment>
<comment type="interaction">
    <interactant intactId="EBI-741158">
        <id>Q96HA8</id>
    </interactant>
    <interactant intactId="EBI-17197485">
        <id>Q9NS25</id>
        <label>SPANXB1</label>
    </interactant>
    <organismsDiffer>false</organismsDiffer>
    <experiments>3</experiments>
</comment>
<comment type="interaction">
    <interactant intactId="EBI-741158">
        <id>Q96HA8</id>
    </interactant>
    <interactant intactId="EBI-12849978">
        <id>Q96LK8</id>
        <label>SPATA32</label>
    </interactant>
    <organismsDiffer>false</organismsDiffer>
    <experiments>3</experiments>
</comment>
<comment type="interaction">
    <interactant intactId="EBI-741158">
        <id>Q96HA8</id>
    </interactant>
    <interactant intactId="EBI-12047907">
        <id>A6NLX3</id>
        <label>SPDYE4</label>
    </interactant>
    <organismsDiffer>false</organismsDiffer>
    <experiments>3</experiments>
</comment>
<comment type="interaction">
    <interactant intactId="EBI-741158">
        <id>Q96HA8</id>
    </interactant>
    <interactant intactId="EBI-1773488">
        <id>Q9BUA3</id>
        <label>SPINDOC</label>
    </interactant>
    <organismsDiffer>false</organismsDiffer>
    <experiments>3</experiments>
</comment>
<comment type="interaction">
    <interactant intactId="EBI-741158">
        <id>Q96HA8</id>
    </interactant>
    <interactant intactId="EBI-12408727">
        <id>Q5W111-2</id>
        <label>SPRYD7</label>
    </interactant>
    <organismsDiffer>false</organismsDiffer>
    <experiments>3</experiments>
</comment>
<comment type="interaction">
    <interactant intactId="EBI-741158">
        <id>Q96HA8</id>
    </interactant>
    <interactant intactId="EBI-2515299">
        <id>O43805</id>
        <label>SSNA1</label>
    </interactant>
    <organismsDiffer>false</organismsDiffer>
    <experiments>3</experiments>
</comment>
<comment type="interaction">
    <interactant intactId="EBI-741158">
        <id>Q96HA8</id>
    </interactant>
    <interactant intactId="EBI-12843506">
        <id>Q8IWL8</id>
        <label>STH</label>
    </interactant>
    <organismsDiffer>false</organismsDiffer>
    <experiments>3</experiments>
</comment>
<comment type="interaction">
    <interactant intactId="EBI-741158">
        <id>Q96HA8</id>
    </interactant>
    <interactant intactId="EBI-714194">
        <id>Q93045</id>
        <label>STMN2</label>
    </interactant>
    <organismsDiffer>false</organismsDiffer>
    <experiments>3</experiments>
</comment>
<comment type="interaction">
    <interactant intactId="EBI-741158">
        <id>Q96HA8</id>
    </interactant>
    <interactant intactId="EBI-746930">
        <id>Q9H668</id>
        <label>STN1</label>
    </interactant>
    <organismsDiffer>false</organismsDiffer>
    <experiments>3</experiments>
</comment>
<comment type="interaction">
    <interactant intactId="EBI-741158">
        <id>Q96HA8</id>
    </interactant>
    <interactant intactId="EBI-714135">
        <id>O75558</id>
        <label>STX11</label>
    </interactant>
    <organismsDiffer>false</organismsDiffer>
    <experiments>3</experiments>
</comment>
<comment type="interaction">
    <interactant intactId="EBI-741158">
        <id>Q96HA8</id>
    </interactant>
    <interactant intactId="EBI-2682386">
        <id>Q96PV0</id>
        <label>SYNGAP1</label>
    </interactant>
    <organismsDiffer>false</organismsDiffer>
    <experiments>3</experiments>
</comment>
<comment type="interaction">
    <interactant intactId="EBI-741158">
        <id>Q96HA8</id>
    </interactant>
    <interactant intactId="EBI-529518">
        <id>Q86VP1</id>
        <label>TAX1BP1</label>
    </interactant>
    <organismsDiffer>false</organismsDiffer>
    <experiments>3</experiments>
</comment>
<comment type="interaction">
    <interactant intactId="EBI-741158">
        <id>Q96HA8</id>
    </interactant>
    <interactant intactId="EBI-10191361">
        <id>Q96SF7</id>
        <label>TBX15</label>
    </interactant>
    <organismsDiffer>false</organismsDiffer>
    <experiments>3</experiments>
</comment>
<comment type="interaction">
    <interactant intactId="EBI-741158">
        <id>Q96HA8</id>
    </interactant>
    <interactant intactId="EBI-749995">
        <id>P56279</id>
        <label>TCL1A</label>
    </interactant>
    <organismsDiffer>false</organismsDiffer>
    <experiments>5</experiments>
</comment>
<comment type="interaction">
    <interactant intactId="EBI-741158">
        <id>Q96HA8</id>
    </interactant>
    <interactant intactId="EBI-3923210">
        <id>Q8TDR4</id>
        <label>TCP10L</label>
    </interactant>
    <organismsDiffer>false</organismsDiffer>
    <experiments>3</experiments>
</comment>
<comment type="interaction">
    <interactant intactId="EBI-741158">
        <id>Q96HA8</id>
    </interactant>
    <interactant intactId="EBI-10180409">
        <id>Q969V4</id>
        <label>TEKT1</label>
    </interactant>
    <organismsDiffer>false</organismsDiffer>
    <experiments>3</experiments>
</comment>
<comment type="interaction">
    <interactant intactId="EBI-741158">
        <id>Q96HA8</id>
    </interactant>
    <interactant intactId="EBI-11139477">
        <id>Q96N21</id>
        <label>TEPSIN</label>
    </interactant>
    <organismsDiffer>false</organismsDiffer>
    <experiments>3</experiments>
</comment>
<comment type="interaction">
    <interactant intactId="EBI-741158">
        <id>Q96HA8</id>
    </interactant>
    <interactant intactId="EBI-741515">
        <id>Q9NVV9</id>
        <label>THAP1</label>
    </interactant>
    <organismsDiffer>false</organismsDiffer>
    <experiments>8</experiments>
</comment>
<comment type="interaction">
    <interactant intactId="EBI-741158">
        <id>Q96HA8</id>
    </interactant>
    <interactant intactId="EBI-3925505">
        <id>Q8TBB0</id>
        <label>THAP6</label>
    </interactant>
    <organismsDiffer>false</organismsDiffer>
    <experiments>3</experiments>
</comment>
<comment type="interaction">
    <interactant intactId="EBI-741158">
        <id>Q96HA8</id>
    </interactant>
    <interactant intactId="EBI-741350">
        <id>Q9BT49</id>
        <label>THAP7</label>
    </interactant>
    <organismsDiffer>false</organismsDiffer>
    <experiments>3</experiments>
</comment>
<comment type="interaction">
    <interactant intactId="EBI-741158">
        <id>Q96HA8</id>
    </interactant>
    <interactant intactId="EBI-746510">
        <id>Q9NWX6</id>
        <label>THG1L</label>
    </interactant>
    <organismsDiffer>false</organismsDiffer>
    <experiments>3</experiments>
</comment>
<comment type="interaction">
    <interactant intactId="EBI-741158">
        <id>Q96HA8</id>
    </interactant>
    <interactant intactId="EBI-525927">
        <id>Q86XR7</id>
        <label>TICAM2</label>
    </interactant>
    <organismsDiffer>false</organismsDiffer>
    <experiments>3</experiments>
</comment>
<comment type="interaction">
    <interactant intactId="EBI-741158">
        <id>Q96HA8</id>
    </interactant>
    <interactant intactId="EBI-740711">
        <id>Q96CG3</id>
        <label>TIFA</label>
    </interactant>
    <organismsDiffer>false</organismsDiffer>
    <experiments>3</experiments>
</comment>
<comment type="interaction">
    <interactant intactId="EBI-741158">
        <id>Q96HA8</id>
    </interactant>
    <interactant intactId="EBI-11741437">
        <id>Q08117-2</id>
        <label>TLE5</label>
    </interactant>
    <organismsDiffer>false</organismsDiffer>
    <experiments>5</experiments>
</comment>
<comment type="interaction">
    <interactant intactId="EBI-741158">
        <id>Q96HA8</id>
    </interactant>
    <interactant intactId="EBI-9675724">
        <id>Q8WW34</id>
        <label>TMEM239</label>
    </interactant>
    <organismsDiffer>false</organismsDiffer>
    <experiments>3</experiments>
</comment>
<comment type="interaction">
    <interactant intactId="EBI-741158">
        <id>Q96HA8</id>
    </interactant>
    <interactant intactId="EBI-2505861">
        <id>Q13829</id>
        <label>TNFAIP1</label>
    </interactant>
    <organismsDiffer>false</organismsDiffer>
    <experiments>3</experiments>
</comment>
<comment type="interaction">
    <interactant intactId="EBI-741158">
        <id>Q96HA8</id>
    </interactant>
    <interactant intactId="EBI-2509913">
        <id>Q96KP6</id>
        <label>TNIP3</label>
    </interactant>
    <organismsDiffer>false</organismsDiffer>
    <experiments>3</experiments>
</comment>
<comment type="interaction">
    <interactant intactId="EBI-741158">
        <id>Q96HA8</id>
    </interactant>
    <interactant intactId="EBI-10182881">
        <id>A1L306</id>
        <label>TNR</label>
    </interactant>
    <organismsDiffer>false</organismsDiffer>
    <experiments>3</experiments>
</comment>
<comment type="interaction">
    <interactant intactId="EBI-741158">
        <id>Q96HA8</id>
    </interactant>
    <interactant intactId="EBI-74615">
        <id>Q9H0E2</id>
        <label>TOLLIP</label>
    </interactant>
    <organismsDiffer>false</organismsDiffer>
    <experiments>4</experiments>
</comment>
<comment type="interaction">
    <interactant intactId="EBI-741158">
        <id>Q96HA8</id>
    </interactant>
    <interactant intactId="EBI-357631">
        <id>Q13114</id>
        <label>TRAF3</label>
    </interactant>
    <organismsDiffer>false</organismsDiffer>
    <experiments>3</experiments>
</comment>
<comment type="interaction">
    <interactant intactId="EBI-741158">
        <id>Q96HA8</id>
    </interactant>
    <interactant intactId="EBI-523498">
        <id>O00463</id>
        <label>TRAF5</label>
    </interactant>
    <organismsDiffer>false</organismsDiffer>
    <experiments>3</experiments>
</comment>
<comment type="interaction">
    <interactant intactId="EBI-741158">
        <id>Q96HA8</id>
    </interactant>
    <interactant intactId="EBI-740098">
        <id>P36406</id>
        <label>TRIM23</label>
    </interactant>
    <organismsDiffer>false</organismsDiffer>
    <experiments>3</experiments>
</comment>
<comment type="interaction">
    <interactant intactId="EBI-741158">
        <id>Q96HA8</id>
    </interactant>
    <interactant intactId="EBI-719493">
        <id>P14373</id>
        <label>TRIM27</label>
    </interactant>
    <organismsDiffer>false</organismsDiffer>
    <experiments>6</experiments>
</comment>
<comment type="interaction">
    <interactant intactId="EBI-741158">
        <id>Q96HA8</id>
    </interactant>
    <interactant intactId="EBI-742790">
        <id>Q13049</id>
        <label>TRIM32</label>
    </interactant>
    <organismsDiffer>false</organismsDiffer>
    <experiments>3</experiments>
</comment>
<comment type="interaction">
    <interactant intactId="EBI-741158">
        <id>Q96HA8</id>
    </interactant>
    <interactant intactId="EBI-12840050">
        <id>Q9C035-3</id>
        <label>TRIM5</label>
    </interactant>
    <organismsDiffer>false</organismsDiffer>
    <experiments>3</experiments>
</comment>
<comment type="interaction">
    <interactant intactId="EBI-741158">
        <id>Q96HA8</id>
    </interactant>
    <interactant intactId="EBI-2130429">
        <id>Q9BYV2</id>
        <label>TRIM54</label>
    </interactant>
    <organismsDiffer>false</organismsDiffer>
    <experiments>6</experiments>
</comment>
<comment type="interaction">
    <interactant intactId="EBI-741158">
        <id>Q96HA8</id>
    </interactant>
    <interactant intactId="EBI-11525489">
        <id>Q86WT6-2</id>
        <label>TRIM69</label>
    </interactant>
    <organismsDiffer>false</organismsDiffer>
    <experiments>3</experiments>
</comment>
<comment type="interaction">
    <interactant intactId="EBI-741158">
        <id>Q96HA8</id>
    </interactant>
    <interactant intactId="EBI-10259086">
        <id>Q86UV6-2</id>
        <label>TRIM74</label>
    </interactant>
    <organismsDiffer>false</organismsDiffer>
    <experiments>3</experiments>
</comment>
<comment type="interaction">
    <interactant intactId="EBI-741158">
        <id>Q96HA8</id>
    </interactant>
    <interactant intactId="EBI-720828">
        <id>Q9C026</id>
        <label>TRIM9</label>
    </interactant>
    <organismsDiffer>false</organismsDiffer>
    <experiments>3</experiments>
</comment>
<comment type="interaction">
    <interactant intactId="EBI-741158">
        <id>Q96HA8</id>
    </interactant>
    <interactant intactId="EBI-358993">
        <id>Q15645</id>
        <label>TRIP13</label>
    </interactant>
    <organismsDiffer>false</organismsDiffer>
    <experiments>3</experiments>
</comment>
<comment type="interaction">
    <interactant intactId="EBI-741158">
        <id>Q96HA8</id>
    </interactant>
    <interactant intactId="EBI-712609">
        <id>Q15714</id>
        <label>TSC22D1</label>
    </interactant>
    <organismsDiffer>false</organismsDiffer>
    <experiments>4</experiments>
</comment>
<comment type="interaction">
    <interactant intactId="EBI-741158">
        <id>Q96HA8</id>
    </interactant>
    <interactant intactId="EBI-12034704">
        <id>Q15714-2</id>
        <label>TSC22D1</label>
    </interactant>
    <organismsDiffer>false</organismsDiffer>
    <experiments>3</experiments>
</comment>
<comment type="interaction">
    <interactant intactId="EBI-741158">
        <id>Q96HA8</id>
    </interactant>
    <interactant intactId="EBI-1044160">
        <id>Q15631</id>
        <label>TSN</label>
    </interactant>
    <organismsDiffer>false</organismsDiffer>
    <experiments>3</experiments>
</comment>
<comment type="interaction">
    <interactant intactId="EBI-741158">
        <id>Q96HA8</id>
    </interactant>
    <interactant intactId="EBI-21353855">
        <id>Q99598</id>
        <label>TSNAX</label>
    </interactant>
    <organismsDiffer>false</organismsDiffer>
    <experiments>3</experiments>
</comment>
<comment type="interaction">
    <interactant intactId="EBI-741158">
        <id>Q96HA8</id>
    </interactant>
    <interactant intactId="EBI-1045733">
        <id>Q9Y3C8</id>
        <label>UFC1</label>
    </interactant>
    <organismsDiffer>false</organismsDiffer>
    <experiments>3</experiments>
</comment>
<comment type="interaction">
    <interactant intactId="EBI-741158">
        <id>Q96HA8</id>
    </interactant>
    <interactant intactId="EBI-12817837">
        <id>Q9H9P5-5</id>
        <label>UNKL</label>
    </interactant>
    <organismsDiffer>false</organismsDiffer>
    <experiments>3</experiments>
</comment>
<comment type="interaction">
    <interactant intactId="EBI-741158">
        <id>Q96HA8</id>
    </interactant>
    <interactant intactId="EBI-2107455">
        <id>Q08AM6</id>
        <label>VAC14</label>
    </interactant>
    <organismsDiffer>false</organismsDiffer>
    <experiments>5</experiments>
</comment>
<comment type="interaction">
    <interactant intactId="EBI-741158">
        <id>Q96HA8</id>
    </interactant>
    <interactant intactId="EBI-355164">
        <id>P55072</id>
        <label>VCP</label>
    </interactant>
    <organismsDiffer>false</organismsDiffer>
    <experiments>6</experiments>
</comment>
<comment type="interaction">
    <interactant intactId="EBI-741158">
        <id>Q96HA8</id>
    </interactant>
    <interactant intactId="EBI-12874016">
        <id>P11473-2</id>
        <label>VDR</label>
    </interactant>
    <organismsDiffer>false</organismsDiffer>
    <experiments>3</experiments>
</comment>
<comment type="interaction">
    <interactant intactId="EBI-741158">
        <id>Q96HA8</id>
    </interactant>
    <interactant intactId="EBI-2559305">
        <id>A5D8V6</id>
        <label>VPS37C</label>
    </interactant>
    <organismsDiffer>false</organismsDiffer>
    <experiments>6</experiments>
</comment>
<comment type="interaction">
    <interactant intactId="EBI-741158">
        <id>Q96HA8</id>
    </interactant>
    <interactant intactId="EBI-12071548">
        <id>Q8TAG6</id>
        <label>VXN</label>
    </interactant>
    <organismsDiffer>false</organismsDiffer>
    <experiments>3</experiments>
</comment>
<comment type="interaction">
    <interactant intactId="EBI-741158">
        <id>Q96HA8</id>
    </interactant>
    <interactant intactId="EBI-517127">
        <id>P98170</id>
        <label>XIAP</label>
    </interactant>
    <organismsDiffer>false</organismsDiffer>
    <experiments>4</experiments>
</comment>
<comment type="interaction">
    <interactant intactId="EBI-741158">
        <id>Q96HA8</id>
    </interactant>
    <interactant intactId="EBI-740037">
        <id>O96006</id>
        <label>ZBED1</label>
    </interactant>
    <organismsDiffer>false</organismsDiffer>
    <experiments>3</experiments>
</comment>
<comment type="interaction">
    <interactant intactId="EBI-741158">
        <id>Q96HA8</id>
    </interactant>
    <interactant intactId="EBI-742740">
        <id>Q96BR9</id>
        <label>ZBTB8A</label>
    </interactant>
    <organismsDiffer>false</organismsDiffer>
    <experiments>3</experiments>
</comment>
<comment type="interaction">
    <interactant intactId="EBI-741158">
        <id>Q96HA8</id>
    </interactant>
    <interactant intactId="EBI-17494306">
        <id>Q8NAP8</id>
        <label>ZBTB8B</label>
    </interactant>
    <organismsDiffer>false</organismsDiffer>
    <experiments>3</experiments>
</comment>
<comment type="interaction">
    <interactant intactId="EBI-741158">
        <id>Q96HA8</id>
    </interactant>
    <interactant intactId="EBI-14104088">
        <id>Q53FD0-2</id>
        <label>ZC2HC1C</label>
    </interactant>
    <organismsDiffer>false</organismsDiffer>
    <experiments>3</experiments>
</comment>
<comment type="interaction">
    <interactant intactId="EBI-741158">
        <id>Q96HA8</id>
    </interactant>
    <interactant intactId="EBI-746345">
        <id>Q9NP64</id>
        <label>ZCCHC17</label>
    </interactant>
    <organismsDiffer>false</organismsDiffer>
    <experiments>3</experiments>
</comment>
<comment type="interaction">
    <interactant intactId="EBI-741158">
        <id>Q96HA8</id>
    </interactant>
    <interactant intactId="EBI-741694">
        <id>P49910</id>
        <label>ZNF165</label>
    </interactant>
    <organismsDiffer>false</organismsDiffer>
    <experiments>3</experiments>
</comment>
<comment type="interaction">
    <interactant intactId="EBI-741158">
        <id>Q96HA8</id>
    </interactant>
    <interactant intactId="EBI-9089622">
        <id>Q9BYN7</id>
        <label>ZNF341</label>
    </interactant>
    <organismsDiffer>false</organismsDiffer>
    <experiments>3</experiments>
</comment>
<comment type="interaction">
    <interactant intactId="EBI-741158">
        <id>Q96HA8</id>
    </interactant>
    <interactant intactId="EBI-8489702">
        <id>Q9C0F3</id>
        <label>ZNF436</label>
    </interactant>
    <organismsDiffer>false</organismsDiffer>
    <experiments>3</experiments>
</comment>
<comment type="interaction">
    <interactant intactId="EBI-741158">
        <id>Q96HA8</id>
    </interactant>
    <interactant intactId="EBI-10269136">
        <id>Q8NB15</id>
        <label>ZNF511</label>
    </interactant>
    <organismsDiffer>false</organismsDiffer>
    <experiments>3</experiments>
</comment>
<comment type="interaction">
    <interactant intactId="EBI-741158">
        <id>Q96HA8</id>
    </interactant>
    <interactant intactId="EBI-6255994">
        <id>Q5T7W0</id>
        <label>ZNF618</label>
    </interactant>
    <organismsDiffer>false</organismsDiffer>
    <experiments>3</experiments>
</comment>
<comment type="interaction">
    <interactant intactId="EBI-741158">
        <id>Q96HA8</id>
    </interactant>
    <interactant intactId="EBI-723596">
        <id>Q9H4T2</id>
        <label>ZSCAN16</label>
    </interactant>
    <organismsDiffer>false</organismsDiffer>
    <experiments>3</experiments>
</comment>
<comment type="interaction">
    <interactant intactId="EBI-741158">
        <id>Q96HA8</id>
    </interactant>
    <interactant intactId="EBI-25475856">
        <id>P0DTC9</id>
        <label>N</label>
    </interactant>
    <organismsDiffer>true</organismsDiffer>
    <experiments>4</experiments>
</comment>
<comment type="subcellular location">
    <subcellularLocation>
        <location evidence="2">Cytoplasm</location>
        <location evidence="2">Cytosol</location>
    </subcellularLocation>
    <subcellularLocation>
        <location evidence="2">Nucleus</location>
    </subcellularLocation>
</comment>
<comment type="alternative products">
    <event type="alternative splicing"/>
    <isoform>
        <id>Q96HA8-1</id>
        <name>1</name>
        <sequence type="displayed"/>
    </isoform>
    <isoform>
        <id>Q96HA8-2</id>
        <name>2</name>
        <sequence type="described" ref="VSP_055268"/>
    </isoform>
</comment>
<comment type="similarity">
    <text evidence="6">Belongs to the NTAQ1 family.</text>
</comment>
<evidence type="ECO:0000250" key="1"/>
<evidence type="ECO:0000250" key="2">
    <source>
        <dbReference type="UniProtKB" id="Q80WB5"/>
    </source>
</evidence>
<evidence type="ECO:0000269" key="3">
    <source>
    </source>
</evidence>
<evidence type="ECO:0000269" key="4">
    <source>
    </source>
</evidence>
<evidence type="ECO:0000303" key="5">
    <source>
    </source>
</evidence>
<evidence type="ECO:0000305" key="6"/>
<evidence type="ECO:0000312" key="7">
    <source>
        <dbReference type="HGNC" id="HGNC:25490"/>
    </source>
</evidence>
<evidence type="ECO:0007829" key="8">
    <source>
        <dbReference type="PDB" id="3C9Q"/>
    </source>
</evidence>
<evidence type="ECO:0007829" key="9">
    <source>
        <dbReference type="PDB" id="6KGJ"/>
    </source>
</evidence>
<reference key="1">
    <citation type="journal article" date="2004" name="Nat. Genet.">
        <title>Complete sequencing and characterization of 21,243 full-length human cDNAs.</title>
        <authorList>
            <person name="Ota T."/>
            <person name="Suzuki Y."/>
            <person name="Nishikawa T."/>
            <person name="Otsuki T."/>
            <person name="Sugiyama T."/>
            <person name="Irie R."/>
            <person name="Wakamatsu A."/>
            <person name="Hayashi K."/>
            <person name="Sato H."/>
            <person name="Nagai K."/>
            <person name="Kimura K."/>
            <person name="Makita H."/>
            <person name="Sekine M."/>
            <person name="Obayashi M."/>
            <person name="Nishi T."/>
            <person name="Shibahara T."/>
            <person name="Tanaka T."/>
            <person name="Ishii S."/>
            <person name="Yamamoto J."/>
            <person name="Saito K."/>
            <person name="Kawai Y."/>
            <person name="Isono Y."/>
            <person name="Nakamura Y."/>
            <person name="Nagahari K."/>
            <person name="Murakami K."/>
            <person name="Yasuda T."/>
            <person name="Iwayanagi T."/>
            <person name="Wagatsuma M."/>
            <person name="Shiratori A."/>
            <person name="Sudo H."/>
            <person name="Hosoiri T."/>
            <person name="Kaku Y."/>
            <person name="Kodaira H."/>
            <person name="Kondo H."/>
            <person name="Sugawara M."/>
            <person name="Takahashi M."/>
            <person name="Kanda K."/>
            <person name="Yokoi T."/>
            <person name="Furuya T."/>
            <person name="Kikkawa E."/>
            <person name="Omura Y."/>
            <person name="Abe K."/>
            <person name="Kamihara K."/>
            <person name="Katsuta N."/>
            <person name="Sato K."/>
            <person name="Tanikawa M."/>
            <person name="Yamazaki M."/>
            <person name="Ninomiya K."/>
            <person name="Ishibashi T."/>
            <person name="Yamashita H."/>
            <person name="Murakawa K."/>
            <person name="Fujimori K."/>
            <person name="Tanai H."/>
            <person name="Kimata M."/>
            <person name="Watanabe M."/>
            <person name="Hiraoka S."/>
            <person name="Chiba Y."/>
            <person name="Ishida S."/>
            <person name="Ono Y."/>
            <person name="Takiguchi S."/>
            <person name="Watanabe S."/>
            <person name="Yosida M."/>
            <person name="Hotuta T."/>
            <person name="Kusano J."/>
            <person name="Kanehori K."/>
            <person name="Takahashi-Fujii A."/>
            <person name="Hara H."/>
            <person name="Tanase T.-O."/>
            <person name="Nomura Y."/>
            <person name="Togiya S."/>
            <person name="Komai F."/>
            <person name="Hara R."/>
            <person name="Takeuchi K."/>
            <person name="Arita M."/>
            <person name="Imose N."/>
            <person name="Musashino K."/>
            <person name="Yuuki H."/>
            <person name="Oshima A."/>
            <person name="Sasaki N."/>
            <person name="Aotsuka S."/>
            <person name="Yoshikawa Y."/>
            <person name="Matsunawa H."/>
            <person name="Ichihara T."/>
            <person name="Shiohata N."/>
            <person name="Sano S."/>
            <person name="Moriya S."/>
            <person name="Momiyama H."/>
            <person name="Satoh N."/>
            <person name="Takami S."/>
            <person name="Terashima Y."/>
            <person name="Suzuki O."/>
            <person name="Nakagawa S."/>
            <person name="Senoh A."/>
            <person name="Mizoguchi H."/>
            <person name="Goto Y."/>
            <person name="Shimizu F."/>
            <person name="Wakebe H."/>
            <person name="Hishigaki H."/>
            <person name="Watanabe T."/>
            <person name="Sugiyama A."/>
            <person name="Takemoto M."/>
            <person name="Kawakami B."/>
            <person name="Yamazaki M."/>
            <person name="Watanabe K."/>
            <person name="Kumagai A."/>
            <person name="Itakura S."/>
            <person name="Fukuzumi Y."/>
            <person name="Fujimori Y."/>
            <person name="Komiyama M."/>
            <person name="Tashiro H."/>
            <person name="Tanigami A."/>
            <person name="Fujiwara T."/>
            <person name="Ono T."/>
            <person name="Yamada K."/>
            <person name="Fujii Y."/>
            <person name="Ozaki K."/>
            <person name="Hirao M."/>
            <person name="Ohmori Y."/>
            <person name="Kawabata A."/>
            <person name="Hikiji T."/>
            <person name="Kobatake N."/>
            <person name="Inagaki H."/>
            <person name="Ikema Y."/>
            <person name="Okamoto S."/>
            <person name="Okitani R."/>
            <person name="Kawakami T."/>
            <person name="Noguchi S."/>
            <person name="Itoh T."/>
            <person name="Shigeta K."/>
            <person name="Senba T."/>
            <person name="Matsumura K."/>
            <person name="Nakajima Y."/>
            <person name="Mizuno T."/>
            <person name="Morinaga M."/>
            <person name="Sasaki M."/>
            <person name="Togashi T."/>
            <person name="Oyama M."/>
            <person name="Hata H."/>
            <person name="Watanabe M."/>
            <person name="Komatsu T."/>
            <person name="Mizushima-Sugano J."/>
            <person name="Satoh T."/>
            <person name="Shirai Y."/>
            <person name="Takahashi Y."/>
            <person name="Nakagawa K."/>
            <person name="Okumura K."/>
            <person name="Nagase T."/>
            <person name="Nomura N."/>
            <person name="Kikuchi H."/>
            <person name="Masuho Y."/>
            <person name="Yamashita R."/>
            <person name="Nakai K."/>
            <person name="Yada T."/>
            <person name="Nakamura Y."/>
            <person name="Ohara O."/>
            <person name="Isogai T."/>
            <person name="Sugano S."/>
        </authorList>
    </citation>
    <scope>NUCLEOTIDE SEQUENCE [LARGE SCALE MRNA] (ISOFORMS 1 AND 2)</scope>
    <source>
        <tissue>Cerebellum</tissue>
        <tissue>Embryo</tissue>
    </source>
</reference>
<reference key="2">
    <citation type="journal article" date="2006" name="Nature">
        <title>DNA sequence and analysis of human chromosome 8.</title>
        <authorList>
            <person name="Nusbaum C."/>
            <person name="Mikkelsen T.S."/>
            <person name="Zody M.C."/>
            <person name="Asakawa S."/>
            <person name="Taudien S."/>
            <person name="Garber M."/>
            <person name="Kodira C.D."/>
            <person name="Schueler M.G."/>
            <person name="Shimizu A."/>
            <person name="Whittaker C.A."/>
            <person name="Chang J.L."/>
            <person name="Cuomo C.A."/>
            <person name="Dewar K."/>
            <person name="FitzGerald M.G."/>
            <person name="Yang X."/>
            <person name="Allen N.R."/>
            <person name="Anderson S."/>
            <person name="Asakawa T."/>
            <person name="Blechschmidt K."/>
            <person name="Bloom T."/>
            <person name="Borowsky M.L."/>
            <person name="Butler J."/>
            <person name="Cook A."/>
            <person name="Corum B."/>
            <person name="DeArellano K."/>
            <person name="DeCaprio D."/>
            <person name="Dooley K.T."/>
            <person name="Dorris L. III"/>
            <person name="Engels R."/>
            <person name="Gloeckner G."/>
            <person name="Hafez N."/>
            <person name="Hagopian D.S."/>
            <person name="Hall J.L."/>
            <person name="Ishikawa S.K."/>
            <person name="Jaffe D.B."/>
            <person name="Kamat A."/>
            <person name="Kudoh J."/>
            <person name="Lehmann R."/>
            <person name="Lokitsang T."/>
            <person name="Macdonald P."/>
            <person name="Major J.E."/>
            <person name="Matthews C.D."/>
            <person name="Mauceli E."/>
            <person name="Menzel U."/>
            <person name="Mihalev A.H."/>
            <person name="Minoshima S."/>
            <person name="Murayama Y."/>
            <person name="Naylor J.W."/>
            <person name="Nicol R."/>
            <person name="Nguyen C."/>
            <person name="O'Leary S.B."/>
            <person name="O'Neill K."/>
            <person name="Parker S.C.J."/>
            <person name="Polley A."/>
            <person name="Raymond C.K."/>
            <person name="Reichwald K."/>
            <person name="Rodriguez J."/>
            <person name="Sasaki T."/>
            <person name="Schilhabel M."/>
            <person name="Siddiqui R."/>
            <person name="Smith C.L."/>
            <person name="Sneddon T.P."/>
            <person name="Talamas J.A."/>
            <person name="Tenzin P."/>
            <person name="Topham K."/>
            <person name="Venkataraman V."/>
            <person name="Wen G."/>
            <person name="Yamazaki S."/>
            <person name="Young S.K."/>
            <person name="Zeng Q."/>
            <person name="Zimmer A.R."/>
            <person name="Rosenthal A."/>
            <person name="Birren B.W."/>
            <person name="Platzer M."/>
            <person name="Shimizu N."/>
            <person name="Lander E.S."/>
        </authorList>
    </citation>
    <scope>NUCLEOTIDE SEQUENCE [LARGE SCALE GENOMIC DNA]</scope>
</reference>
<reference key="3">
    <citation type="submission" date="2005-07" db="EMBL/GenBank/DDBJ databases">
        <authorList>
            <person name="Mural R.J."/>
            <person name="Istrail S."/>
            <person name="Sutton G."/>
            <person name="Florea L."/>
            <person name="Halpern A.L."/>
            <person name="Mobarry C.M."/>
            <person name="Lippert R."/>
            <person name="Walenz B."/>
            <person name="Shatkay H."/>
            <person name="Dew I."/>
            <person name="Miller J.R."/>
            <person name="Flanigan M.J."/>
            <person name="Edwards N.J."/>
            <person name="Bolanos R."/>
            <person name="Fasulo D."/>
            <person name="Halldorsson B.V."/>
            <person name="Hannenhalli S."/>
            <person name="Turner R."/>
            <person name="Yooseph S."/>
            <person name="Lu F."/>
            <person name="Nusskern D.R."/>
            <person name="Shue B.C."/>
            <person name="Zheng X.H."/>
            <person name="Zhong F."/>
            <person name="Delcher A.L."/>
            <person name="Huson D.H."/>
            <person name="Kravitz S.A."/>
            <person name="Mouchard L."/>
            <person name="Reinert K."/>
            <person name="Remington K.A."/>
            <person name="Clark A.G."/>
            <person name="Waterman M.S."/>
            <person name="Eichler E.E."/>
            <person name="Adams M.D."/>
            <person name="Hunkapiller M.W."/>
            <person name="Myers E.W."/>
            <person name="Venter J.C."/>
        </authorList>
    </citation>
    <scope>NUCLEOTIDE SEQUENCE [LARGE SCALE GENOMIC DNA]</scope>
</reference>
<reference key="4">
    <citation type="journal article" date="2004" name="Genome Res.">
        <title>The status, quality, and expansion of the NIH full-length cDNA project: the Mammalian Gene Collection (MGC).</title>
        <authorList>
            <consortium name="The MGC Project Team"/>
        </authorList>
    </citation>
    <scope>NUCLEOTIDE SEQUENCE [LARGE SCALE MRNA] (ISOFORM 1)</scope>
    <scope>VARIANTS VAL-32; SER-93; ILE-116 AND CYS-134</scope>
    <source>
        <tissue>Uterus</tissue>
    </source>
</reference>
<reference key="5">
    <citation type="journal article" date="2014" name="PLoS ONE">
        <title>Crystal structure of human protein N-terminal glutamine amidohydrolase, an initial component of the N-end rule pathway.</title>
        <authorList>
            <person name="Park M.S."/>
            <person name="Bitto E."/>
            <person name="Kim K.R."/>
            <person name="Bingman C.A."/>
            <person name="Miller M.D."/>
            <person name="Kim H.J."/>
            <person name="Han B.W."/>
            <person name="Phillips G.N. Jr."/>
        </authorList>
    </citation>
    <scope>X-RAY CRYSTALLOGRAPHY (1.5 ANGSTROMS) OF 2-205 IN COMPLEX WITH SER-THR-ALA TRIPEPTIDE</scope>
    <scope>SUBUNIT</scope>
</reference>
<protein>
    <recommendedName>
        <fullName evidence="6">Protein N-terminal glutamine amidohydrolase</fullName>
        <ecNumber evidence="2">3.5.1.122</ecNumber>
    </recommendedName>
    <alternativeName>
        <fullName>Protein NH2-terminal glutamine deamidase</fullName>
        <shortName>N-terminal Gln amidase</shortName>
        <shortName>Nt(Q)-amidase</shortName>
    </alternativeName>
    <alternativeName>
        <fullName>WDYHV motif-containing protein 1</fullName>
    </alternativeName>
</protein>
<feature type="chain" id="PRO_0000279409" description="Protein N-terminal glutamine amidohydrolase">
    <location>
        <begin position="1"/>
        <end position="205"/>
    </location>
</feature>
<feature type="active site" evidence="1">
    <location>
        <position position="28"/>
    </location>
</feature>
<feature type="active site" evidence="1">
    <location>
        <position position="81"/>
    </location>
</feature>
<feature type="active site" evidence="1">
    <location>
        <position position="97"/>
    </location>
</feature>
<feature type="splice variant" id="VSP_055268" description="In isoform 2." evidence="5">
    <location>
        <begin position="1"/>
        <end position="60"/>
    </location>
</feature>
<feature type="sequence variant" id="VAR_030882" description="In dbSNP:rs6999234." evidence="3">
    <original>I</original>
    <variation>V</variation>
    <location>
        <position position="32"/>
    </location>
</feature>
<feature type="sequence variant" id="VAR_030883" description="In dbSNP:rs7014678." evidence="3">
    <original>N</original>
    <variation>S</variation>
    <location>
        <position position="93"/>
    </location>
</feature>
<feature type="sequence variant" id="VAR_030884" description="In dbSNP:rs6470147." evidence="3">
    <original>F</original>
    <variation>I</variation>
    <location>
        <position position="116"/>
    </location>
</feature>
<feature type="sequence variant" id="VAR_030885" description="In dbSNP:rs3824250." evidence="3">
    <original>R</original>
    <variation>C</variation>
    <location>
        <position position="134"/>
    </location>
</feature>
<feature type="helix" evidence="9">
    <location>
        <begin position="6"/>
        <end position="8"/>
    </location>
</feature>
<feature type="helix" evidence="8">
    <location>
        <begin position="18"/>
        <end position="20"/>
    </location>
</feature>
<feature type="helix" evidence="8">
    <location>
        <begin position="28"/>
        <end position="41"/>
    </location>
</feature>
<feature type="strand" evidence="8">
    <location>
        <begin position="42"/>
        <end position="45"/>
    </location>
</feature>
<feature type="helix" evidence="8">
    <location>
        <begin position="47"/>
        <end position="49"/>
    </location>
</feature>
<feature type="strand" evidence="8">
    <location>
        <begin position="50"/>
        <end position="56"/>
    </location>
</feature>
<feature type="strand" evidence="8">
    <location>
        <begin position="62"/>
        <end position="67"/>
    </location>
</feature>
<feature type="strand" evidence="9">
    <location>
        <begin position="70"/>
        <end position="74"/>
    </location>
</feature>
<feature type="strand" evidence="8">
    <location>
        <begin position="76"/>
        <end position="79"/>
    </location>
</feature>
<feature type="strand" evidence="8">
    <location>
        <begin position="81"/>
        <end position="88"/>
    </location>
</feature>
<feature type="turn" evidence="8">
    <location>
        <begin position="89"/>
        <end position="91"/>
    </location>
</feature>
<feature type="strand" evidence="8">
    <location>
        <begin position="92"/>
        <end position="96"/>
    </location>
</feature>
<feature type="strand" evidence="8">
    <location>
        <begin position="100"/>
        <end position="102"/>
    </location>
</feature>
<feature type="strand" evidence="8">
    <location>
        <begin position="104"/>
        <end position="107"/>
    </location>
</feature>
<feature type="helix" evidence="8">
    <location>
        <begin position="108"/>
        <end position="114"/>
    </location>
</feature>
<feature type="helix" evidence="8">
    <location>
        <begin position="124"/>
        <end position="126"/>
    </location>
</feature>
<feature type="strand" evidence="8">
    <location>
        <begin position="129"/>
        <end position="134"/>
    </location>
</feature>
<feature type="helix" evidence="8">
    <location>
        <begin position="135"/>
        <end position="141"/>
    </location>
</feature>
<feature type="helix" evidence="8">
    <location>
        <begin position="147"/>
        <end position="149"/>
    </location>
</feature>
<feature type="strand" evidence="8">
    <location>
        <begin position="152"/>
        <end position="154"/>
    </location>
</feature>
<feature type="strand" evidence="8">
    <location>
        <begin position="156"/>
        <end position="158"/>
    </location>
</feature>
<feature type="helix" evidence="8">
    <location>
        <begin position="176"/>
        <end position="179"/>
    </location>
</feature>
<feature type="strand" evidence="8">
    <location>
        <begin position="185"/>
        <end position="192"/>
    </location>
</feature>
<feature type="helix" evidence="8">
    <location>
        <begin position="193"/>
        <end position="200"/>
    </location>
</feature>
<proteinExistence type="evidence at protein level"/>